<comment type="function">
    <text evidence="3 4 5 16 17">One of the early assembly proteins, it binds 23S rRNA; is essential for growth. One of the proteins that surround the polypeptide exit tunnel on the outside of the subunit. Acts as the docking site for trigger factor (PubMed:12226666) for Ffh binding to the ribosome (SRP54) (PubMed:12756233, PubMed:12702815) and to nascent polypeptide chains (PubMed:12756233).</text>
</comment>
<comment type="subunit">
    <text evidence="2 3 5 6 7 8 9 10 11 12 13 14 15 20">Part of the 50S ribosomal subunit (PubMed:10094780, PubMed:12809609, PubMed:16272117, PubMed:21499241, PubMed:24844575, PubMed:25310980, PubMed:27906160, PubMed:27906161, PubMed:27934701, PubMed:391594). Contacts protein L29 and trigger factor. Might also contact SecE and probably does contact SecG and SecY when the SecYEG translocation complex is docked with the ribosome (PubMed:16292303).</text>
</comment>
<comment type="interaction">
    <interactant intactId="EBI-542264">
        <id>P0ADZ0</id>
    </interactant>
    <interactant intactId="EBI-543949">
        <id>P0A7W1</id>
        <label>rpsE</label>
    </interactant>
    <organismsDiffer>false</organismsDiffer>
    <experiments>2</experiments>
</comment>
<comment type="interaction">
    <interactant intactId="EBI-542264">
        <id>P0ADZ0</id>
    </interactant>
    <interactant intactId="EBI-543276">
        <id>P0A8Z3</id>
        <label>ybgC</label>
    </interactant>
    <organismsDiffer>false</organismsDiffer>
    <experiments>2</experiments>
</comment>
<comment type="interaction">
    <interactant intactId="EBI-542264">
        <id>P0ADZ0</id>
    </interactant>
    <interactant intactId="EBI-549937">
        <id>P39336</id>
        <label>yjgL</label>
    </interactant>
    <organismsDiffer>false</organismsDiffer>
    <experiments>2</experiments>
</comment>
<comment type="mass spectrometry"/>
<comment type="similarity">
    <text evidence="1">Belongs to the universal ribosomal protein uL23 family.</text>
</comment>
<proteinExistence type="evidence at protein level"/>
<evidence type="ECO:0000255" key="1">
    <source>
        <dbReference type="HAMAP-Rule" id="MF_01369"/>
    </source>
</evidence>
<evidence type="ECO:0000269" key="2">
    <source>
    </source>
</evidence>
<evidence type="ECO:0000269" key="3">
    <source>
    </source>
</evidence>
<evidence type="ECO:0000269" key="4">
    <source>
    </source>
</evidence>
<evidence type="ECO:0000269" key="5">
    <source>
    </source>
</evidence>
<evidence type="ECO:0000269" key="6">
    <source>
    </source>
</evidence>
<evidence type="ECO:0000269" key="7">
    <source>
    </source>
</evidence>
<evidence type="ECO:0000269" key="8">
    <source>
    </source>
</evidence>
<evidence type="ECO:0000269" key="9">
    <source>
    </source>
</evidence>
<evidence type="ECO:0000269" key="10">
    <source>
    </source>
</evidence>
<evidence type="ECO:0000269" key="11">
    <source>
    </source>
</evidence>
<evidence type="ECO:0000269" key="12">
    <source>
    </source>
</evidence>
<evidence type="ECO:0000269" key="13">
    <source>
    </source>
</evidence>
<evidence type="ECO:0000269" key="14">
    <source>
    </source>
</evidence>
<evidence type="ECO:0000269" key="15">
    <source>
    </source>
</evidence>
<evidence type="ECO:0000269" key="16">
    <source>
    </source>
</evidence>
<evidence type="ECO:0000269" key="17">
    <source>
    </source>
</evidence>
<evidence type="ECO:0000303" key="18">
    <source>
    </source>
</evidence>
<evidence type="ECO:0000305" key="19"/>
<evidence type="ECO:0000305" key="20">
    <source>
    </source>
</evidence>
<evidence type="ECO:0007829" key="21">
    <source>
        <dbReference type="PDB" id="8CGK"/>
    </source>
</evidence>
<gene>
    <name evidence="1" type="primary">rplW</name>
    <name type="ordered locus">b3318</name>
    <name type="ordered locus">JW3280</name>
</gene>
<organism>
    <name type="scientific">Escherichia coli (strain K12)</name>
    <dbReference type="NCBI Taxonomy" id="83333"/>
    <lineage>
        <taxon>Bacteria</taxon>
        <taxon>Pseudomonadati</taxon>
        <taxon>Pseudomonadota</taxon>
        <taxon>Gammaproteobacteria</taxon>
        <taxon>Enterobacterales</taxon>
        <taxon>Enterobacteriaceae</taxon>
        <taxon>Escherichia</taxon>
    </lineage>
</organism>
<feature type="chain" id="PRO_0000129407" description="Large ribosomal subunit protein uL23">
    <location>
        <begin position="1"/>
        <end position="100"/>
    </location>
</feature>
<feature type="mutagenesis site" description="Strongly reduces trigger factor binding." evidence="3">
    <original>VSE</original>
    <variation>AAA</variation>
    <location>
        <begin position="16"/>
        <end position="18"/>
    </location>
</feature>
<feature type="mutagenesis site" description="Binds normally to ribosomes; strongly reduces trigger factor binding." evidence="3">
    <original>E</original>
    <variation>A</variation>
    <location>
        <position position="18"/>
    </location>
</feature>
<feature type="mutagenesis site" description="Strongly reduces trigger factor binding." evidence="3">
    <original>E</original>
    <variation>Q</variation>
    <location>
        <position position="18"/>
    </location>
</feature>
<feature type="mutagenesis site" description="No effect on trigger factor binding." evidence="3">
    <original>FEV</original>
    <variation>AAA</variation>
    <location>
        <begin position="51"/>
        <end position="53"/>
    </location>
</feature>
<feature type="mutagenesis site" description="No effect on trigger factor binding." evidence="3">
    <original>E</original>
    <variation>K</variation>
    <location>
        <position position="52"/>
    </location>
</feature>
<feature type="sequence conflict" description="In Ref. 1; AA sequence." evidence="19" ref="1">
    <location>
        <position position="80"/>
    </location>
</feature>
<feature type="helix" evidence="21">
    <location>
        <begin position="4"/>
        <end position="10"/>
    </location>
</feature>
<feature type="strand" evidence="21">
    <location>
        <begin position="11"/>
        <end position="14"/>
    </location>
</feature>
<feature type="helix" evidence="21">
    <location>
        <begin position="18"/>
        <end position="27"/>
    </location>
</feature>
<feature type="strand" evidence="21">
    <location>
        <begin position="29"/>
        <end position="34"/>
    </location>
</feature>
<feature type="helix" evidence="21">
    <location>
        <begin position="40"/>
        <end position="50"/>
    </location>
</feature>
<feature type="strand" evidence="21">
    <location>
        <begin position="55"/>
        <end position="63"/>
    </location>
</feature>
<feature type="strand" evidence="21">
    <location>
        <begin position="67"/>
        <end position="70"/>
    </location>
</feature>
<feature type="strand" evidence="21">
    <location>
        <begin position="73"/>
        <end position="76"/>
    </location>
</feature>
<feature type="strand" evidence="21">
    <location>
        <begin position="80"/>
        <end position="87"/>
    </location>
</feature>
<accession>P0ADZ0</accession>
<accession>P02424</accession>
<accession>Q2M6Y3</accession>
<keyword id="KW-0002">3D-structure</keyword>
<keyword id="KW-0903">Direct protein sequencing</keyword>
<keyword id="KW-1185">Reference proteome</keyword>
<keyword id="KW-0687">Ribonucleoprotein</keyword>
<keyword id="KW-0689">Ribosomal protein</keyword>
<keyword id="KW-0694">RNA-binding</keyword>
<keyword id="KW-0699">rRNA-binding</keyword>
<protein>
    <recommendedName>
        <fullName evidence="1 18">Large ribosomal subunit protein uL23</fullName>
    </recommendedName>
    <alternativeName>
        <fullName>50S ribosomal protein L23</fullName>
    </alternativeName>
</protein>
<sequence>MIREERLLKVLRAPHVSEKASTAMEKSNTIVLKVAKDATKAEIKAAVQKLFEVEVEVVNTLVVKGKVKRHGQRIGRRSDWKKAYVTLKEGQNLDFVGGAE</sequence>
<dbReference type="EMBL" id="X02613">
    <property type="protein sequence ID" value="CAA26462.1"/>
    <property type="molecule type" value="Genomic_DNA"/>
</dbReference>
<dbReference type="EMBL" id="U18997">
    <property type="protein sequence ID" value="AAA58115.1"/>
    <property type="molecule type" value="Genomic_DNA"/>
</dbReference>
<dbReference type="EMBL" id="U00096">
    <property type="protein sequence ID" value="AAC76343.1"/>
    <property type="molecule type" value="Genomic_DNA"/>
</dbReference>
<dbReference type="EMBL" id="AP009048">
    <property type="protein sequence ID" value="BAE77973.1"/>
    <property type="molecule type" value="Genomic_DNA"/>
</dbReference>
<dbReference type="PIR" id="A65125">
    <property type="entry name" value="R5EC23"/>
</dbReference>
<dbReference type="RefSeq" id="NP_417777.1">
    <property type="nucleotide sequence ID" value="NC_000913.3"/>
</dbReference>
<dbReference type="RefSeq" id="WP_000617544.1">
    <property type="nucleotide sequence ID" value="NZ_STEB01000038.1"/>
</dbReference>
<dbReference type="PDB" id="1ML5">
    <property type="method" value="EM"/>
    <property type="resolution" value="14.00 A"/>
    <property type="chains" value="t=2-85"/>
</dbReference>
<dbReference type="PDB" id="2J28">
    <property type="method" value="EM"/>
    <property type="resolution" value="8.00 A"/>
    <property type="chains" value="T=1-99"/>
</dbReference>
<dbReference type="PDB" id="2RDO">
    <property type="method" value="EM"/>
    <property type="resolution" value="9.10 A"/>
    <property type="chains" value="T=1-100"/>
</dbReference>
<dbReference type="PDB" id="2VRH">
    <property type="method" value="EM"/>
    <property type="resolution" value="19.00 A"/>
    <property type="chains" value="B=1-100"/>
</dbReference>
<dbReference type="PDB" id="3BBX">
    <property type="method" value="EM"/>
    <property type="resolution" value="10.00 A"/>
    <property type="chains" value="T=1-100"/>
</dbReference>
<dbReference type="PDB" id="3IY9">
    <property type="method" value="EM"/>
    <property type="resolution" value="14.10 A"/>
    <property type="chains" value="T=1-99"/>
</dbReference>
<dbReference type="PDB" id="3J45">
    <property type="method" value="EM"/>
    <property type="resolution" value="9.50 A"/>
    <property type="chains" value="T=1-100"/>
</dbReference>
<dbReference type="PDB" id="3J46">
    <property type="method" value="EM"/>
    <property type="resolution" value="10.10 A"/>
    <property type="chains" value="T=1-100"/>
</dbReference>
<dbReference type="PDB" id="3J5L">
    <property type="method" value="EM"/>
    <property type="resolution" value="6.60 A"/>
    <property type="chains" value="T=1-93"/>
</dbReference>
<dbReference type="PDB" id="3J7Z">
    <property type="method" value="EM"/>
    <property type="resolution" value="3.90 A"/>
    <property type="chains" value="T=1-100"/>
</dbReference>
<dbReference type="PDB" id="3J8G">
    <property type="method" value="EM"/>
    <property type="resolution" value="5.00 A"/>
    <property type="chains" value="T=1-100"/>
</dbReference>
<dbReference type="PDB" id="3J9Y">
    <property type="method" value="EM"/>
    <property type="resolution" value="3.90 A"/>
    <property type="chains" value="T=1-100"/>
</dbReference>
<dbReference type="PDB" id="3J9Z">
    <property type="method" value="EM"/>
    <property type="resolution" value="3.60 A"/>
    <property type="chains" value="LR=1-100"/>
</dbReference>
<dbReference type="PDB" id="3JA1">
    <property type="method" value="EM"/>
    <property type="resolution" value="3.60 A"/>
    <property type="chains" value="LV=1-100"/>
</dbReference>
<dbReference type="PDB" id="3JBU">
    <property type="method" value="EM"/>
    <property type="resolution" value="3.64 A"/>
    <property type="chains" value="t=1-100"/>
</dbReference>
<dbReference type="PDB" id="3JBV">
    <property type="method" value="EM"/>
    <property type="resolution" value="3.32 A"/>
    <property type="chains" value="t=1-100"/>
</dbReference>
<dbReference type="PDB" id="3JCD">
    <property type="method" value="EM"/>
    <property type="resolution" value="3.70 A"/>
    <property type="chains" value="T=1-100"/>
</dbReference>
<dbReference type="PDB" id="3JCE">
    <property type="method" value="EM"/>
    <property type="resolution" value="3.20 A"/>
    <property type="chains" value="T=1-100"/>
</dbReference>
<dbReference type="PDB" id="3JCJ">
    <property type="method" value="EM"/>
    <property type="resolution" value="3.70 A"/>
    <property type="chains" value="S=1-100"/>
</dbReference>
<dbReference type="PDB" id="3JCN">
    <property type="method" value="EM"/>
    <property type="resolution" value="4.60 A"/>
    <property type="chains" value="T=1-100"/>
</dbReference>
<dbReference type="PDB" id="4CSU">
    <property type="method" value="EM"/>
    <property type="resolution" value="5.50 A"/>
    <property type="chains" value="T=1-100"/>
</dbReference>
<dbReference type="PDB" id="4U1U">
    <property type="method" value="X-ray"/>
    <property type="resolution" value="2.95 A"/>
    <property type="chains" value="BT/DT=1-93"/>
</dbReference>
<dbReference type="PDB" id="4U1V">
    <property type="method" value="X-ray"/>
    <property type="resolution" value="3.00 A"/>
    <property type="chains" value="BT/DT=1-93"/>
</dbReference>
<dbReference type="PDB" id="4U20">
    <property type="method" value="X-ray"/>
    <property type="resolution" value="2.90 A"/>
    <property type="chains" value="BT/DT=1-93"/>
</dbReference>
<dbReference type="PDB" id="4U24">
    <property type="method" value="X-ray"/>
    <property type="resolution" value="2.90 A"/>
    <property type="chains" value="BT/DT=1-93"/>
</dbReference>
<dbReference type="PDB" id="4U25">
    <property type="method" value="X-ray"/>
    <property type="resolution" value="2.90 A"/>
    <property type="chains" value="BT/DT=1-93"/>
</dbReference>
<dbReference type="PDB" id="4U26">
    <property type="method" value="X-ray"/>
    <property type="resolution" value="2.80 A"/>
    <property type="chains" value="BT/DT=1-93"/>
</dbReference>
<dbReference type="PDB" id="4U27">
    <property type="method" value="X-ray"/>
    <property type="resolution" value="2.80 A"/>
    <property type="chains" value="BT/DT=1-93"/>
</dbReference>
<dbReference type="PDB" id="4UY8">
    <property type="method" value="EM"/>
    <property type="resolution" value="3.80 A"/>
    <property type="chains" value="T=1-93"/>
</dbReference>
<dbReference type="PDB" id="4V47">
    <property type="method" value="EM"/>
    <property type="resolution" value="12.30 A"/>
    <property type="chains" value="AR=1-100"/>
</dbReference>
<dbReference type="PDB" id="4V48">
    <property type="method" value="EM"/>
    <property type="resolution" value="11.50 A"/>
    <property type="chains" value="AR=1-100"/>
</dbReference>
<dbReference type="PDB" id="4V4H">
    <property type="method" value="X-ray"/>
    <property type="resolution" value="3.46 A"/>
    <property type="chains" value="BT/DT=1-100"/>
</dbReference>
<dbReference type="PDB" id="4V4Q">
    <property type="method" value="X-ray"/>
    <property type="resolution" value="3.46 A"/>
    <property type="chains" value="BT/DT=1-100"/>
</dbReference>
<dbReference type="PDB" id="4V4V">
    <property type="method" value="EM"/>
    <property type="resolution" value="15.00 A"/>
    <property type="chains" value="BR=7-98"/>
</dbReference>
<dbReference type="PDB" id="4V4W">
    <property type="method" value="EM"/>
    <property type="resolution" value="15.00 A"/>
    <property type="chains" value="BR=7-98"/>
</dbReference>
<dbReference type="PDB" id="4V50">
    <property type="method" value="X-ray"/>
    <property type="resolution" value="3.22 A"/>
    <property type="chains" value="BT/DT=1-100"/>
</dbReference>
<dbReference type="PDB" id="4V52">
    <property type="method" value="X-ray"/>
    <property type="resolution" value="3.21 A"/>
    <property type="chains" value="BT/DT=1-100"/>
</dbReference>
<dbReference type="PDB" id="4V53">
    <property type="method" value="X-ray"/>
    <property type="resolution" value="3.54 A"/>
    <property type="chains" value="BT/DT=1-100"/>
</dbReference>
<dbReference type="PDB" id="4V54">
    <property type="method" value="X-ray"/>
    <property type="resolution" value="3.30 A"/>
    <property type="chains" value="BT/DT=1-100"/>
</dbReference>
<dbReference type="PDB" id="4V55">
    <property type="method" value="X-ray"/>
    <property type="resolution" value="4.00 A"/>
    <property type="chains" value="BT/DT=1-100"/>
</dbReference>
<dbReference type="PDB" id="4V56">
    <property type="method" value="X-ray"/>
    <property type="resolution" value="3.93 A"/>
    <property type="chains" value="BT/DT=1-100"/>
</dbReference>
<dbReference type="PDB" id="4V57">
    <property type="method" value="X-ray"/>
    <property type="resolution" value="3.50 A"/>
    <property type="chains" value="BT/DT=1-100"/>
</dbReference>
<dbReference type="PDB" id="4V5B">
    <property type="method" value="X-ray"/>
    <property type="resolution" value="3.74 A"/>
    <property type="chains" value="AT/CT=1-100"/>
</dbReference>
<dbReference type="PDB" id="4V5H">
    <property type="method" value="EM"/>
    <property type="resolution" value="5.80 A"/>
    <property type="chains" value="BT=1-93"/>
</dbReference>
<dbReference type="PDB" id="4V5Y">
    <property type="method" value="X-ray"/>
    <property type="resolution" value="4.45 A"/>
    <property type="chains" value="BT/DT=1-100"/>
</dbReference>
<dbReference type="PDB" id="4V64">
    <property type="method" value="X-ray"/>
    <property type="resolution" value="3.50 A"/>
    <property type="chains" value="BT/DT=1-100"/>
</dbReference>
<dbReference type="PDB" id="4V65">
    <property type="method" value="EM"/>
    <property type="resolution" value="9.00 A"/>
    <property type="chains" value="BM=1-99"/>
</dbReference>
<dbReference type="PDB" id="4V66">
    <property type="method" value="EM"/>
    <property type="resolution" value="9.00 A"/>
    <property type="chains" value="BM=1-99"/>
</dbReference>
<dbReference type="PDB" id="4V69">
    <property type="method" value="EM"/>
    <property type="resolution" value="6.70 A"/>
    <property type="chains" value="BT=1-93"/>
</dbReference>
<dbReference type="PDB" id="4V6C">
    <property type="method" value="X-ray"/>
    <property type="resolution" value="3.19 A"/>
    <property type="chains" value="BT/DT=1-100"/>
</dbReference>
<dbReference type="PDB" id="4V6D">
    <property type="method" value="X-ray"/>
    <property type="resolution" value="3.81 A"/>
    <property type="chains" value="BT/DT=1-100"/>
</dbReference>
<dbReference type="PDB" id="4V6E">
    <property type="method" value="X-ray"/>
    <property type="resolution" value="3.71 A"/>
    <property type="chains" value="BT/DT=1-100"/>
</dbReference>
<dbReference type="PDB" id="4V6K">
    <property type="method" value="EM"/>
    <property type="resolution" value="8.25 A"/>
    <property type="chains" value="AU=1-100"/>
</dbReference>
<dbReference type="PDB" id="4V6L">
    <property type="method" value="EM"/>
    <property type="resolution" value="13.20 A"/>
    <property type="chains" value="BU=1-100"/>
</dbReference>
<dbReference type="PDB" id="4V6M">
    <property type="method" value="EM"/>
    <property type="resolution" value="7.10 A"/>
    <property type="chains" value="BT=1-100"/>
</dbReference>
<dbReference type="PDB" id="4V6N">
    <property type="method" value="EM"/>
    <property type="resolution" value="12.10 A"/>
    <property type="chains" value="AV=1-100"/>
</dbReference>
<dbReference type="PDB" id="4V6O">
    <property type="method" value="EM"/>
    <property type="resolution" value="14.70 A"/>
    <property type="chains" value="BV=1-100"/>
</dbReference>
<dbReference type="PDB" id="4V6P">
    <property type="method" value="EM"/>
    <property type="resolution" value="13.50 A"/>
    <property type="chains" value="BV=1-100"/>
</dbReference>
<dbReference type="PDB" id="4V6Q">
    <property type="method" value="EM"/>
    <property type="resolution" value="11.50 A"/>
    <property type="chains" value="BV=1-100"/>
</dbReference>
<dbReference type="PDB" id="4V6R">
    <property type="method" value="EM"/>
    <property type="resolution" value="11.50 A"/>
    <property type="chains" value="BV=1-100"/>
</dbReference>
<dbReference type="PDB" id="4V6S">
    <property type="method" value="EM"/>
    <property type="resolution" value="13.10 A"/>
    <property type="chains" value="AV=1-100"/>
</dbReference>
<dbReference type="PDB" id="4V6T">
    <property type="method" value="EM"/>
    <property type="resolution" value="8.30 A"/>
    <property type="chains" value="BT=1-93"/>
</dbReference>
<dbReference type="PDB" id="4V6V">
    <property type="method" value="EM"/>
    <property type="resolution" value="9.80 A"/>
    <property type="chains" value="BX=1-100"/>
</dbReference>
<dbReference type="PDB" id="4V6Y">
    <property type="method" value="EM"/>
    <property type="resolution" value="12.00 A"/>
    <property type="chains" value="BT=1-93"/>
</dbReference>
<dbReference type="PDB" id="4V6Z">
    <property type="method" value="EM"/>
    <property type="resolution" value="12.00 A"/>
    <property type="chains" value="BT=1-93"/>
</dbReference>
<dbReference type="PDB" id="4V70">
    <property type="method" value="EM"/>
    <property type="resolution" value="17.00 A"/>
    <property type="chains" value="BT=1-93"/>
</dbReference>
<dbReference type="PDB" id="4V71">
    <property type="method" value="EM"/>
    <property type="resolution" value="20.00 A"/>
    <property type="chains" value="BT=1-93"/>
</dbReference>
<dbReference type="PDB" id="4V72">
    <property type="method" value="EM"/>
    <property type="resolution" value="13.00 A"/>
    <property type="chains" value="BT=1-93"/>
</dbReference>
<dbReference type="PDB" id="4V73">
    <property type="method" value="EM"/>
    <property type="resolution" value="15.00 A"/>
    <property type="chains" value="BT=1-93"/>
</dbReference>
<dbReference type="PDB" id="4V74">
    <property type="method" value="EM"/>
    <property type="resolution" value="17.00 A"/>
    <property type="chains" value="BT=1-93"/>
</dbReference>
<dbReference type="PDB" id="4V75">
    <property type="method" value="EM"/>
    <property type="resolution" value="12.00 A"/>
    <property type="chains" value="BT=1-93"/>
</dbReference>
<dbReference type="PDB" id="4V76">
    <property type="method" value="EM"/>
    <property type="resolution" value="17.00 A"/>
    <property type="chains" value="BT=1-93"/>
</dbReference>
<dbReference type="PDB" id="4V77">
    <property type="method" value="EM"/>
    <property type="resolution" value="17.00 A"/>
    <property type="chains" value="BT=1-93"/>
</dbReference>
<dbReference type="PDB" id="4V78">
    <property type="method" value="EM"/>
    <property type="resolution" value="20.00 A"/>
    <property type="chains" value="BT=1-93"/>
</dbReference>
<dbReference type="PDB" id="4V79">
    <property type="method" value="EM"/>
    <property type="resolution" value="15.00 A"/>
    <property type="chains" value="BT=1-93"/>
</dbReference>
<dbReference type="PDB" id="4V7A">
    <property type="method" value="EM"/>
    <property type="resolution" value="9.00 A"/>
    <property type="chains" value="BT=1-93"/>
</dbReference>
<dbReference type="PDB" id="4V7B">
    <property type="method" value="EM"/>
    <property type="resolution" value="6.80 A"/>
    <property type="chains" value="BT=1-100"/>
</dbReference>
<dbReference type="PDB" id="4V7C">
    <property type="method" value="EM"/>
    <property type="resolution" value="7.60 A"/>
    <property type="chains" value="BV=1-100"/>
</dbReference>
<dbReference type="PDB" id="4V7D">
    <property type="method" value="EM"/>
    <property type="resolution" value="7.60 A"/>
    <property type="chains" value="AW=1-100"/>
</dbReference>
<dbReference type="PDB" id="4V7I">
    <property type="method" value="EM"/>
    <property type="resolution" value="9.60 A"/>
    <property type="chains" value="AT=1-100"/>
</dbReference>
<dbReference type="PDB" id="4V7S">
    <property type="method" value="X-ray"/>
    <property type="resolution" value="3.25 A"/>
    <property type="chains" value="BT/DT=1-93"/>
</dbReference>
<dbReference type="PDB" id="4V7T">
    <property type="method" value="X-ray"/>
    <property type="resolution" value="3.19 A"/>
    <property type="chains" value="BT/DT=1-93"/>
</dbReference>
<dbReference type="PDB" id="4V7U">
    <property type="method" value="X-ray"/>
    <property type="resolution" value="3.10 A"/>
    <property type="chains" value="BT/DT=1-93"/>
</dbReference>
<dbReference type="PDB" id="4V7V">
    <property type="method" value="X-ray"/>
    <property type="resolution" value="3.29 A"/>
    <property type="chains" value="BT/DT=1-93"/>
</dbReference>
<dbReference type="PDB" id="4V85">
    <property type="method" value="X-ray"/>
    <property type="resolution" value="3.20 A"/>
    <property type="chains" value="BX=1-100"/>
</dbReference>
<dbReference type="PDB" id="4V89">
    <property type="method" value="X-ray"/>
    <property type="resolution" value="3.70 A"/>
    <property type="chains" value="BX=1-100"/>
</dbReference>
<dbReference type="PDB" id="4V9C">
    <property type="method" value="X-ray"/>
    <property type="resolution" value="3.30 A"/>
    <property type="chains" value="BT/DT=1-100"/>
</dbReference>
<dbReference type="PDB" id="4V9D">
    <property type="method" value="X-ray"/>
    <property type="resolution" value="3.00 A"/>
    <property type="chains" value="CT/DT=1-93"/>
</dbReference>
<dbReference type="PDB" id="4V9O">
    <property type="method" value="X-ray"/>
    <property type="resolution" value="2.90 A"/>
    <property type="chains" value="AT/CT/ET/GT=1-100"/>
</dbReference>
<dbReference type="PDB" id="4V9P">
    <property type="method" value="X-ray"/>
    <property type="resolution" value="2.90 A"/>
    <property type="chains" value="AT/CT/ET/GT=1-100"/>
</dbReference>
<dbReference type="PDB" id="4WF1">
    <property type="method" value="X-ray"/>
    <property type="resolution" value="3.09 A"/>
    <property type="chains" value="BT/DT=1-93"/>
</dbReference>
<dbReference type="PDB" id="4WOI">
    <property type="method" value="X-ray"/>
    <property type="resolution" value="3.00 A"/>
    <property type="chains" value="BT/CT=1-100"/>
</dbReference>
<dbReference type="PDB" id="4WWW">
    <property type="method" value="X-ray"/>
    <property type="resolution" value="3.10 A"/>
    <property type="chains" value="RT/YT=1-93"/>
</dbReference>
<dbReference type="PDB" id="4YBB">
    <property type="method" value="X-ray"/>
    <property type="resolution" value="2.10 A"/>
    <property type="chains" value="CU/DU=1-93"/>
</dbReference>
<dbReference type="PDB" id="5ADY">
    <property type="method" value="EM"/>
    <property type="resolution" value="4.50 A"/>
    <property type="chains" value="T=1-100"/>
</dbReference>
<dbReference type="PDB" id="5AFI">
    <property type="method" value="EM"/>
    <property type="resolution" value="2.90 A"/>
    <property type="chains" value="T=1-100"/>
</dbReference>
<dbReference type="PDB" id="5AKA">
    <property type="method" value="EM"/>
    <property type="resolution" value="5.70 A"/>
    <property type="chains" value="T=1-100"/>
</dbReference>
<dbReference type="PDB" id="5GAD">
    <property type="method" value="EM"/>
    <property type="resolution" value="3.70 A"/>
    <property type="chains" value="U=1-100"/>
</dbReference>
<dbReference type="PDB" id="5GAE">
    <property type="method" value="EM"/>
    <property type="resolution" value="3.33 A"/>
    <property type="chains" value="U=1-100"/>
</dbReference>
<dbReference type="PDB" id="5GAF">
    <property type="method" value="EM"/>
    <property type="resolution" value="4.30 A"/>
    <property type="chains" value="U=2-96"/>
</dbReference>
<dbReference type="PDB" id="5GAG">
    <property type="method" value="EM"/>
    <property type="resolution" value="3.80 A"/>
    <property type="chains" value="U=1-100"/>
</dbReference>
<dbReference type="PDB" id="5GAH">
    <property type="method" value="EM"/>
    <property type="resolution" value="3.80 A"/>
    <property type="chains" value="U=1-100"/>
</dbReference>
<dbReference type="PDB" id="5H5U">
    <property type="method" value="EM"/>
    <property type="resolution" value="3.00 A"/>
    <property type="chains" value="U=1-100"/>
</dbReference>
<dbReference type="PDB" id="5IQR">
    <property type="method" value="EM"/>
    <property type="resolution" value="3.00 A"/>
    <property type="chains" value="T=1-100"/>
</dbReference>
<dbReference type="PDB" id="5IT8">
    <property type="method" value="X-ray"/>
    <property type="resolution" value="3.12 A"/>
    <property type="chains" value="CU/DU=1-93"/>
</dbReference>
<dbReference type="PDB" id="5J5B">
    <property type="method" value="X-ray"/>
    <property type="resolution" value="2.80 A"/>
    <property type="chains" value="CU/DU=1-93"/>
</dbReference>
<dbReference type="PDB" id="5J7L">
    <property type="method" value="X-ray"/>
    <property type="resolution" value="3.00 A"/>
    <property type="chains" value="CU/DU=1-93"/>
</dbReference>
<dbReference type="PDB" id="5J88">
    <property type="method" value="X-ray"/>
    <property type="resolution" value="3.32 A"/>
    <property type="chains" value="CU/DU=1-100"/>
</dbReference>
<dbReference type="PDB" id="5J8A">
    <property type="method" value="X-ray"/>
    <property type="resolution" value="3.10 A"/>
    <property type="chains" value="CU/DU=1-93"/>
</dbReference>
<dbReference type="PDB" id="5J91">
    <property type="method" value="X-ray"/>
    <property type="resolution" value="2.96 A"/>
    <property type="chains" value="CU/DU=1-93"/>
</dbReference>
<dbReference type="PDB" id="5JC9">
    <property type="method" value="X-ray"/>
    <property type="resolution" value="3.03 A"/>
    <property type="chains" value="CU/DU=1-93"/>
</dbReference>
<dbReference type="PDB" id="5JTE">
    <property type="method" value="EM"/>
    <property type="resolution" value="3.60 A"/>
    <property type="chains" value="BT=1-100"/>
</dbReference>
<dbReference type="PDB" id="5JU8">
    <property type="method" value="EM"/>
    <property type="resolution" value="3.60 A"/>
    <property type="chains" value="BT=1-100"/>
</dbReference>
<dbReference type="PDB" id="5KCR">
    <property type="method" value="EM"/>
    <property type="resolution" value="3.60 A"/>
    <property type="chains" value="1X=1-100"/>
</dbReference>
<dbReference type="PDB" id="5KCS">
    <property type="method" value="EM"/>
    <property type="resolution" value="3.90 A"/>
    <property type="chains" value="1X=1-100"/>
</dbReference>
<dbReference type="PDB" id="5KPS">
    <property type="method" value="EM"/>
    <property type="resolution" value="3.90 A"/>
    <property type="chains" value="T=1-100"/>
</dbReference>
<dbReference type="PDB" id="5KPV">
    <property type="method" value="EM"/>
    <property type="resolution" value="4.10 A"/>
    <property type="chains" value="S=1-100"/>
</dbReference>
<dbReference type="PDB" id="5KPW">
    <property type="method" value="EM"/>
    <property type="resolution" value="3.90 A"/>
    <property type="chains" value="S=1-100"/>
</dbReference>
<dbReference type="PDB" id="5KPX">
    <property type="method" value="EM"/>
    <property type="resolution" value="3.90 A"/>
    <property type="chains" value="S=1-100"/>
</dbReference>
<dbReference type="PDB" id="5L3P">
    <property type="method" value="EM"/>
    <property type="resolution" value="3.70 A"/>
    <property type="chains" value="X=1-100"/>
</dbReference>
<dbReference type="PDB" id="5LZA">
    <property type="method" value="EM"/>
    <property type="resolution" value="3.60 A"/>
    <property type="chains" value="T=1-93"/>
</dbReference>
<dbReference type="PDB" id="5LZB">
    <property type="method" value="EM"/>
    <property type="resolution" value="5.30 A"/>
    <property type="chains" value="T=1-93"/>
</dbReference>
<dbReference type="PDB" id="5LZC">
    <property type="method" value="EM"/>
    <property type="resolution" value="4.80 A"/>
    <property type="chains" value="T=1-93"/>
</dbReference>
<dbReference type="PDB" id="5LZD">
    <property type="method" value="EM"/>
    <property type="resolution" value="3.40 A"/>
    <property type="chains" value="T=1-93"/>
</dbReference>
<dbReference type="PDB" id="5LZE">
    <property type="method" value="EM"/>
    <property type="resolution" value="3.50 A"/>
    <property type="chains" value="T=1-93"/>
</dbReference>
<dbReference type="PDB" id="5LZF">
    <property type="method" value="EM"/>
    <property type="resolution" value="4.60 A"/>
    <property type="chains" value="T=1-93"/>
</dbReference>
<dbReference type="PDB" id="5MDV">
    <property type="method" value="EM"/>
    <property type="resolution" value="2.97 A"/>
    <property type="chains" value="T=1-100"/>
</dbReference>
<dbReference type="PDB" id="5MDW">
    <property type="method" value="EM"/>
    <property type="resolution" value="3.06 A"/>
    <property type="chains" value="T=1-100"/>
</dbReference>
<dbReference type="PDB" id="5MDY">
    <property type="method" value="EM"/>
    <property type="resolution" value="3.35 A"/>
    <property type="chains" value="T=1-100"/>
</dbReference>
<dbReference type="PDB" id="5MDZ">
    <property type="method" value="EM"/>
    <property type="resolution" value="3.10 A"/>
    <property type="chains" value="T=1-100"/>
</dbReference>
<dbReference type="PDB" id="5MGP">
    <property type="method" value="EM"/>
    <property type="resolution" value="3.10 A"/>
    <property type="chains" value="T=1-93"/>
</dbReference>
<dbReference type="PDB" id="5NCO">
    <property type="method" value="EM"/>
    <property type="resolution" value="4.80 A"/>
    <property type="chains" value="U=2-96"/>
</dbReference>
<dbReference type="PDB" id="5NP6">
    <property type="method" value="EM"/>
    <property type="resolution" value="3.60 A"/>
    <property type="chains" value="r=1-93"/>
</dbReference>
<dbReference type="PDB" id="5NWY">
    <property type="method" value="EM"/>
    <property type="resolution" value="2.93 A"/>
    <property type="chains" value="g=1-100"/>
</dbReference>
<dbReference type="PDB" id="5O2R">
    <property type="method" value="EM"/>
    <property type="resolution" value="3.40 A"/>
    <property type="chains" value="T=1-93"/>
</dbReference>
<dbReference type="PDB" id="5U4I">
    <property type="method" value="EM"/>
    <property type="resolution" value="3.50 A"/>
    <property type="chains" value="U=1-100"/>
</dbReference>
<dbReference type="PDB" id="5U9F">
    <property type="method" value="EM"/>
    <property type="resolution" value="3.20 A"/>
    <property type="chains" value="22=1-100"/>
</dbReference>
<dbReference type="PDB" id="5U9G">
    <property type="method" value="EM"/>
    <property type="resolution" value="3.20 A"/>
    <property type="chains" value="22=1-100"/>
</dbReference>
<dbReference type="PDB" id="5UYK">
    <property type="method" value="EM"/>
    <property type="resolution" value="3.90 A"/>
    <property type="chains" value="22=1-93"/>
</dbReference>
<dbReference type="PDB" id="5UYL">
    <property type="method" value="EM"/>
    <property type="resolution" value="3.60 A"/>
    <property type="chains" value="22=1-93"/>
</dbReference>
<dbReference type="PDB" id="5UYM">
    <property type="method" value="EM"/>
    <property type="resolution" value="3.20 A"/>
    <property type="chains" value="22=1-93"/>
</dbReference>
<dbReference type="PDB" id="5UYN">
    <property type="method" value="EM"/>
    <property type="resolution" value="4.00 A"/>
    <property type="chains" value="22=1-93"/>
</dbReference>
<dbReference type="PDB" id="5UYP">
    <property type="method" value="EM"/>
    <property type="resolution" value="3.90 A"/>
    <property type="chains" value="22=1-93"/>
</dbReference>
<dbReference type="PDB" id="5UYQ">
    <property type="method" value="EM"/>
    <property type="resolution" value="3.80 A"/>
    <property type="chains" value="22=1-93"/>
</dbReference>
<dbReference type="PDB" id="5WDT">
    <property type="method" value="EM"/>
    <property type="resolution" value="3.00 A"/>
    <property type="chains" value="T=2-93"/>
</dbReference>
<dbReference type="PDB" id="5WE4">
    <property type="method" value="EM"/>
    <property type="resolution" value="3.10 A"/>
    <property type="chains" value="T=2-93"/>
</dbReference>
<dbReference type="PDB" id="5WE6">
    <property type="method" value="EM"/>
    <property type="resolution" value="3.40 A"/>
    <property type="chains" value="T=2-93"/>
</dbReference>
<dbReference type="PDB" id="5WF0">
    <property type="method" value="EM"/>
    <property type="resolution" value="3.60 A"/>
    <property type="chains" value="T=2-93"/>
</dbReference>
<dbReference type="PDB" id="5WFK">
    <property type="method" value="EM"/>
    <property type="resolution" value="3.40 A"/>
    <property type="chains" value="T=2-93"/>
</dbReference>
<dbReference type="PDB" id="5WFS">
    <property type="method" value="EM"/>
    <property type="resolution" value="3.00 A"/>
    <property type="chains" value="T=2-93"/>
</dbReference>
<dbReference type="PDB" id="6BU8">
    <property type="method" value="EM"/>
    <property type="resolution" value="3.50 A"/>
    <property type="chains" value="22=1-93"/>
</dbReference>
<dbReference type="PDB" id="6BY1">
    <property type="method" value="X-ray"/>
    <property type="resolution" value="3.94 A"/>
    <property type="chains" value="CT/DT=1-93"/>
</dbReference>
<dbReference type="PDB" id="6C4I">
    <property type="method" value="EM"/>
    <property type="resolution" value="3.24 A"/>
    <property type="chains" value="U=1-100"/>
</dbReference>
<dbReference type="PDB" id="6DNC">
    <property type="method" value="EM"/>
    <property type="resolution" value="3.70 A"/>
    <property type="chains" value="X=1-100"/>
</dbReference>
<dbReference type="PDB" id="6ENF">
    <property type="method" value="EM"/>
    <property type="resolution" value="3.20 A"/>
    <property type="chains" value="T=1-93"/>
</dbReference>
<dbReference type="PDB" id="6ENJ">
    <property type="method" value="EM"/>
    <property type="resolution" value="3.70 A"/>
    <property type="chains" value="T=1-93"/>
</dbReference>
<dbReference type="PDB" id="6ENU">
    <property type="method" value="EM"/>
    <property type="resolution" value="3.10 A"/>
    <property type="chains" value="T=1-93"/>
</dbReference>
<dbReference type="PDB" id="6FU8">
    <property type="method" value="EM"/>
    <property type="resolution" value="3.20 A"/>
    <property type="chains" value="C=1-93"/>
</dbReference>
<dbReference type="PDB" id="6GBZ">
    <property type="method" value="EM"/>
    <property type="resolution" value="3.80 A"/>
    <property type="chains" value="T=1-93"/>
</dbReference>
<dbReference type="PDB" id="6GC0">
    <property type="method" value="EM"/>
    <property type="resolution" value="3.80 A"/>
    <property type="chains" value="T=1-93"/>
</dbReference>
<dbReference type="PDB" id="6GC4">
    <property type="method" value="EM"/>
    <property type="resolution" value="4.30 A"/>
    <property type="chains" value="T=1-93"/>
</dbReference>
<dbReference type="PDB" id="6GC6">
    <property type="method" value="EM"/>
    <property type="resolution" value="4.30 A"/>
    <property type="chains" value="T=1-93"/>
</dbReference>
<dbReference type="PDB" id="6GC7">
    <property type="method" value="EM"/>
    <property type="resolution" value="4.30 A"/>
    <property type="chains" value="T=1-93"/>
</dbReference>
<dbReference type="PDB" id="6GC8">
    <property type="method" value="EM"/>
    <property type="resolution" value="3.80 A"/>
    <property type="chains" value="T=1-93"/>
</dbReference>
<dbReference type="PDB" id="6GWT">
    <property type="method" value="EM"/>
    <property type="resolution" value="3.80 A"/>
    <property type="chains" value="T=1-93"/>
</dbReference>
<dbReference type="PDB" id="6GXM">
    <property type="method" value="EM"/>
    <property type="resolution" value="3.80 A"/>
    <property type="chains" value="T=1-93"/>
</dbReference>
<dbReference type="PDB" id="6GXN">
    <property type="method" value="EM"/>
    <property type="resolution" value="3.90 A"/>
    <property type="chains" value="T=1-93"/>
</dbReference>
<dbReference type="PDB" id="6GXO">
    <property type="method" value="EM"/>
    <property type="resolution" value="3.90 A"/>
    <property type="chains" value="T=1-93"/>
</dbReference>
<dbReference type="PDB" id="6GXP">
    <property type="method" value="EM"/>
    <property type="resolution" value="4.40 A"/>
    <property type="chains" value="T=1-93"/>
</dbReference>
<dbReference type="PDB" id="6H4N">
    <property type="method" value="EM"/>
    <property type="resolution" value="3.00 A"/>
    <property type="chains" value="T=1-93"/>
</dbReference>
<dbReference type="PDB" id="6H58">
    <property type="method" value="EM"/>
    <property type="resolution" value="7.90 A"/>
    <property type="chains" value="T/TT=1-93"/>
</dbReference>
<dbReference type="PDB" id="6HRM">
    <property type="method" value="EM"/>
    <property type="resolution" value="2.96 A"/>
    <property type="chains" value="T=1-94"/>
</dbReference>
<dbReference type="PDB" id="6I0Y">
    <property type="method" value="EM"/>
    <property type="resolution" value="3.20 A"/>
    <property type="chains" value="T=1-93"/>
</dbReference>
<dbReference type="PDB" id="6I7V">
    <property type="method" value="X-ray"/>
    <property type="resolution" value="2.90 A"/>
    <property type="chains" value="CU/DU=1-93"/>
</dbReference>
<dbReference type="PDB" id="6O9J">
    <property type="method" value="EM"/>
    <property type="resolution" value="3.90 A"/>
    <property type="chains" value="T=1-99"/>
</dbReference>
<dbReference type="PDB" id="6O9K">
    <property type="method" value="EM"/>
    <property type="resolution" value="4.00 A"/>
    <property type="chains" value="T=1-93"/>
</dbReference>
<dbReference type="PDB" id="6OFX">
    <property type="method" value="EM"/>
    <property type="resolution" value="3.30 A"/>
    <property type="chains" value="t=1-93"/>
</dbReference>
<dbReference type="PDB" id="6OG7">
    <property type="method" value="EM"/>
    <property type="resolution" value="3.30 A"/>
    <property type="chains" value="t=1-93"/>
</dbReference>
<dbReference type="PDB" id="6OGF">
    <property type="method" value="EM"/>
    <property type="resolution" value="3.90 A"/>
    <property type="chains" value="t=1-100"/>
</dbReference>
<dbReference type="PDB" id="6OGG">
    <property type="method" value="EM"/>
    <property type="resolution" value="4.20 A"/>
    <property type="chains" value="t=1-100"/>
</dbReference>
<dbReference type="PDB" id="6OGI">
    <property type="method" value="EM"/>
    <property type="resolution" value="3.40 A"/>
    <property type="chains" value="t=1-100"/>
</dbReference>
<dbReference type="PDB" id="6OM6">
    <property type="method" value="EM"/>
    <property type="resolution" value="3.10 A"/>
    <property type="chains" value="T=1-100"/>
</dbReference>
<dbReference type="PDB" id="6ORE">
    <property type="method" value="EM"/>
    <property type="resolution" value="2.90 A"/>
    <property type="chains" value="T=1-94"/>
</dbReference>
<dbReference type="PDB" id="6ORL">
    <property type="method" value="EM"/>
    <property type="resolution" value="3.50 A"/>
    <property type="chains" value="T=1-94"/>
</dbReference>
<dbReference type="PDB" id="6OSK">
    <property type="method" value="EM"/>
    <property type="resolution" value="3.60 A"/>
    <property type="chains" value="T=1-94"/>
</dbReference>
<dbReference type="PDB" id="6OSQ">
    <property type="method" value="EM"/>
    <property type="resolution" value="3.50 A"/>
    <property type="chains" value="T=1-94"/>
</dbReference>
<dbReference type="PDB" id="6OST">
    <property type="method" value="EM"/>
    <property type="resolution" value="4.20 A"/>
    <property type="chains" value="T=1-94"/>
</dbReference>
<dbReference type="PDB" id="6OT3">
    <property type="method" value="EM"/>
    <property type="resolution" value="3.90 A"/>
    <property type="chains" value="T=1-94"/>
</dbReference>
<dbReference type="PDB" id="6OUO">
    <property type="method" value="EM"/>
    <property type="resolution" value="3.70 A"/>
    <property type="chains" value="T=1-94"/>
</dbReference>
<dbReference type="PDB" id="6PJ6">
    <property type="method" value="EM"/>
    <property type="resolution" value="2.20 A"/>
    <property type="chains" value="b=1-93"/>
</dbReference>
<dbReference type="PDB" id="6Q97">
    <property type="method" value="EM"/>
    <property type="resolution" value="3.90 A"/>
    <property type="chains" value="T=1-94"/>
</dbReference>
<dbReference type="PDB" id="6Q98">
    <property type="method" value="EM"/>
    <property type="resolution" value="4.30 A"/>
    <property type="chains" value="T=1-100"/>
</dbReference>
<dbReference type="PDB" id="6Q9A">
    <property type="method" value="EM"/>
    <property type="resolution" value="3.70 A"/>
    <property type="chains" value="T=1-94"/>
</dbReference>
<dbReference type="PDB" id="6QUL">
    <property type="method" value="EM"/>
    <property type="resolution" value="3.00 A"/>
    <property type="chains" value="U=1-100"/>
</dbReference>
<dbReference type="PDB" id="6S0K">
    <property type="method" value="EM"/>
    <property type="resolution" value="3.10 A"/>
    <property type="chains" value="U=1-100"/>
</dbReference>
<dbReference type="PDB" id="6SZS">
    <property type="method" value="EM"/>
    <property type="resolution" value="3.06 A"/>
    <property type="chains" value="T=1-100"/>
</dbReference>
<dbReference type="PDB" id="6TBV">
    <property type="method" value="EM"/>
    <property type="resolution" value="2.70 A"/>
    <property type="chains" value="L231=1-100"/>
</dbReference>
<dbReference type="PDB" id="6TC3">
    <property type="method" value="EM"/>
    <property type="resolution" value="2.70 A"/>
    <property type="chains" value="L231=1-100"/>
</dbReference>
<dbReference type="PDB" id="6U48">
    <property type="method" value="EM"/>
    <property type="resolution" value="2.87 A"/>
    <property type="chains" value="CU=1-93"/>
</dbReference>
<dbReference type="PDB" id="6VU3">
    <property type="method" value="EM"/>
    <property type="resolution" value="3.70 A"/>
    <property type="chains" value="2=1-94"/>
</dbReference>
<dbReference type="PDB" id="6VWL">
    <property type="method" value="EM"/>
    <property type="resolution" value="3.10 A"/>
    <property type="chains" value="R=1-100"/>
</dbReference>
<dbReference type="PDB" id="6VWM">
    <property type="method" value="EM"/>
    <property type="resolution" value="3.40 A"/>
    <property type="chains" value="R=1-100"/>
</dbReference>
<dbReference type="PDB" id="6VWN">
    <property type="method" value="EM"/>
    <property type="resolution" value="3.40 A"/>
    <property type="chains" value="R=1-100"/>
</dbReference>
<dbReference type="PDB" id="6VYQ">
    <property type="method" value="EM"/>
    <property type="resolution" value="3.70 A"/>
    <property type="chains" value="2=1-100"/>
</dbReference>
<dbReference type="PDB" id="6VYR">
    <property type="method" value="EM"/>
    <property type="resolution" value="3.80 A"/>
    <property type="chains" value="2=1-100"/>
</dbReference>
<dbReference type="PDB" id="6VYS">
    <property type="method" value="EM"/>
    <property type="resolution" value="3.70 A"/>
    <property type="chains" value="2=1-100"/>
</dbReference>
<dbReference type="PDB" id="6VYT">
    <property type="method" value="EM"/>
    <property type="resolution" value="14.00 A"/>
    <property type="chains" value="2=1-100"/>
</dbReference>
<dbReference type="PDB" id="6VYU">
    <property type="method" value="EM"/>
    <property type="resolution" value="7.00 A"/>
    <property type="chains" value="2=1-100"/>
</dbReference>
<dbReference type="PDB" id="6VYW">
    <property type="method" value="EM"/>
    <property type="resolution" value="7.00 A"/>
    <property type="chains" value="2=1-100"/>
</dbReference>
<dbReference type="PDB" id="6VYX">
    <property type="method" value="EM"/>
    <property type="resolution" value="9.90 A"/>
    <property type="chains" value="2=1-100"/>
</dbReference>
<dbReference type="PDB" id="6VYY">
    <property type="method" value="EM"/>
    <property type="resolution" value="9.90 A"/>
    <property type="chains" value="2=1-100"/>
</dbReference>
<dbReference type="PDB" id="6VYZ">
    <property type="method" value="EM"/>
    <property type="resolution" value="9.90 A"/>
    <property type="chains" value="2=1-100"/>
</dbReference>
<dbReference type="PDB" id="6VZ2">
    <property type="method" value="EM"/>
    <property type="resolution" value="10.00 A"/>
    <property type="chains" value="2=1-100"/>
</dbReference>
<dbReference type="PDB" id="6VZ3">
    <property type="method" value="EM"/>
    <property type="resolution" value="8.90 A"/>
    <property type="chains" value="2=1-94"/>
</dbReference>
<dbReference type="PDB" id="6VZ5">
    <property type="method" value="EM"/>
    <property type="resolution" value="8.90 A"/>
    <property type="chains" value="2=1-100"/>
</dbReference>
<dbReference type="PDB" id="6VZ7">
    <property type="method" value="EM"/>
    <property type="resolution" value="7.00 A"/>
    <property type="chains" value="2=1-94"/>
</dbReference>
<dbReference type="PDB" id="6VZJ">
    <property type="method" value="EM"/>
    <property type="resolution" value="4.10 A"/>
    <property type="chains" value="2=1-100"/>
</dbReference>
<dbReference type="PDB" id="6WD0">
    <property type="method" value="EM"/>
    <property type="resolution" value="3.00 A"/>
    <property type="chains" value="t=1-93"/>
</dbReference>
<dbReference type="PDB" id="6WD1">
    <property type="method" value="EM"/>
    <property type="resolution" value="3.30 A"/>
    <property type="chains" value="t=1-93"/>
</dbReference>
<dbReference type="PDB" id="6WD2">
    <property type="method" value="EM"/>
    <property type="resolution" value="3.60 A"/>
    <property type="chains" value="t=1-93"/>
</dbReference>
<dbReference type="PDB" id="6WD3">
    <property type="method" value="EM"/>
    <property type="resolution" value="3.60 A"/>
    <property type="chains" value="t=1-93"/>
</dbReference>
<dbReference type="PDB" id="6WD4">
    <property type="method" value="EM"/>
    <property type="resolution" value="3.70 A"/>
    <property type="chains" value="t=1-93"/>
</dbReference>
<dbReference type="PDB" id="6WD5">
    <property type="method" value="EM"/>
    <property type="resolution" value="3.60 A"/>
    <property type="chains" value="t=1-93"/>
</dbReference>
<dbReference type="PDB" id="6WD6">
    <property type="method" value="EM"/>
    <property type="resolution" value="3.70 A"/>
    <property type="chains" value="t=1-93"/>
</dbReference>
<dbReference type="PDB" id="6WD7">
    <property type="method" value="EM"/>
    <property type="resolution" value="3.90 A"/>
    <property type="chains" value="t=1-93"/>
</dbReference>
<dbReference type="PDB" id="6WD8">
    <property type="method" value="EM"/>
    <property type="resolution" value="3.70 A"/>
    <property type="chains" value="t=1-93"/>
</dbReference>
<dbReference type="PDB" id="6WD9">
    <property type="method" value="EM"/>
    <property type="resolution" value="3.70 A"/>
    <property type="chains" value="t=1-93"/>
</dbReference>
<dbReference type="PDB" id="6WDA">
    <property type="method" value="EM"/>
    <property type="resolution" value="3.80 A"/>
    <property type="chains" value="t=1-93"/>
</dbReference>
<dbReference type="PDB" id="6WDB">
    <property type="method" value="EM"/>
    <property type="resolution" value="4.00 A"/>
    <property type="chains" value="t=1-93"/>
</dbReference>
<dbReference type="PDB" id="6WDC">
    <property type="method" value="EM"/>
    <property type="resolution" value="4.20 A"/>
    <property type="chains" value="t=1-93"/>
</dbReference>
<dbReference type="PDB" id="6WDD">
    <property type="method" value="EM"/>
    <property type="resolution" value="3.20 A"/>
    <property type="chains" value="t=1-93"/>
</dbReference>
<dbReference type="PDB" id="6WDE">
    <property type="method" value="EM"/>
    <property type="resolution" value="3.00 A"/>
    <property type="chains" value="t=1-93"/>
</dbReference>
<dbReference type="PDB" id="6WDF">
    <property type="method" value="EM"/>
    <property type="resolution" value="3.30 A"/>
    <property type="chains" value="t=1-93"/>
</dbReference>
<dbReference type="PDB" id="6WDG">
    <property type="method" value="EM"/>
    <property type="resolution" value="3.30 A"/>
    <property type="chains" value="t=1-93"/>
</dbReference>
<dbReference type="PDB" id="6WDH">
    <property type="method" value="EM"/>
    <property type="resolution" value="4.30 A"/>
    <property type="chains" value="t=1-93"/>
</dbReference>
<dbReference type="PDB" id="6WDI">
    <property type="method" value="EM"/>
    <property type="resolution" value="4.00 A"/>
    <property type="chains" value="t=1-93"/>
</dbReference>
<dbReference type="PDB" id="6WDJ">
    <property type="method" value="EM"/>
    <property type="resolution" value="3.70 A"/>
    <property type="chains" value="t=1-93"/>
</dbReference>
<dbReference type="PDB" id="6WDK">
    <property type="method" value="EM"/>
    <property type="resolution" value="3.60 A"/>
    <property type="chains" value="t=1-93"/>
</dbReference>
<dbReference type="PDB" id="6WDL">
    <property type="method" value="EM"/>
    <property type="resolution" value="3.70 A"/>
    <property type="chains" value="t=1-93"/>
</dbReference>
<dbReference type="PDB" id="6WDM">
    <property type="method" value="EM"/>
    <property type="resolution" value="3.60 A"/>
    <property type="chains" value="t=1-93"/>
</dbReference>
<dbReference type="PDB" id="6WNT">
    <property type="method" value="EM"/>
    <property type="resolution" value="3.10 A"/>
    <property type="chains" value="t=1-93"/>
</dbReference>
<dbReference type="PDB" id="6WNV">
    <property type="method" value="EM"/>
    <property type="resolution" value="3.50 A"/>
    <property type="chains" value="t=1-93"/>
</dbReference>
<dbReference type="PDB" id="6WNW">
    <property type="method" value="EM"/>
    <property type="resolution" value="3.20 A"/>
    <property type="chains" value="t=1-93"/>
</dbReference>
<dbReference type="PDB" id="6X6T">
    <property type="method" value="EM"/>
    <property type="resolution" value="3.20 A"/>
    <property type="chains" value="2=1-100"/>
</dbReference>
<dbReference type="PDB" id="6X7F">
    <property type="method" value="EM"/>
    <property type="resolution" value="3.50 A"/>
    <property type="chains" value="2=1-100"/>
</dbReference>
<dbReference type="PDB" id="6X7K">
    <property type="method" value="EM"/>
    <property type="resolution" value="3.10 A"/>
    <property type="chains" value="2=1-100"/>
</dbReference>
<dbReference type="PDB" id="6X9Q">
    <property type="method" value="EM"/>
    <property type="resolution" value="4.80 A"/>
    <property type="chains" value="2=1-100"/>
</dbReference>
<dbReference type="PDB" id="6XDQ">
    <property type="method" value="EM"/>
    <property type="resolution" value="3.70 A"/>
    <property type="chains" value="2=1-100"/>
</dbReference>
<dbReference type="PDB" id="6XDR">
    <property type="method" value="EM"/>
    <property type="resolution" value="4.70 A"/>
    <property type="chains" value="2=1-100"/>
</dbReference>
<dbReference type="PDB" id="6XGF">
    <property type="method" value="EM"/>
    <property type="resolution" value="5.00 A"/>
    <property type="chains" value="2=1-100"/>
</dbReference>
<dbReference type="PDB" id="6XII">
    <property type="method" value="EM"/>
    <property type="resolution" value="7.00 A"/>
    <property type="chains" value="2=1-100"/>
</dbReference>
<dbReference type="PDB" id="6XIJ">
    <property type="method" value="EM"/>
    <property type="resolution" value="8.00 A"/>
    <property type="chains" value="2=1-100"/>
</dbReference>
<dbReference type="PDB" id="6XZ7">
    <property type="method" value="EM"/>
    <property type="resolution" value="2.10 A"/>
    <property type="chains" value="T=1-93"/>
</dbReference>
<dbReference type="PDB" id="6XZA">
    <property type="method" value="EM"/>
    <property type="resolution" value="2.66 A"/>
    <property type="chains" value="T2=1-93"/>
</dbReference>
<dbReference type="PDB" id="6XZB">
    <property type="method" value="EM"/>
    <property type="resolution" value="2.54 A"/>
    <property type="chains" value="T2=1-93"/>
</dbReference>
<dbReference type="PDB" id="6Y69">
    <property type="method" value="EM"/>
    <property type="resolution" value="2.86 A"/>
    <property type="chains" value="T=1-93"/>
</dbReference>
<dbReference type="PDB" id="6YS3">
    <property type="method" value="EM"/>
    <property type="resolution" value="2.58 A"/>
    <property type="chains" value="t=1-100"/>
</dbReference>
<dbReference type="PDB" id="6YSR">
    <property type="method" value="EM"/>
    <property type="resolution" value="3.10 A"/>
    <property type="chains" value="T=1-100"/>
</dbReference>
<dbReference type="PDB" id="6YSS">
    <property type="method" value="EM"/>
    <property type="resolution" value="2.60 A"/>
    <property type="chains" value="T=1-100"/>
</dbReference>
<dbReference type="PDB" id="6YST">
    <property type="method" value="EM"/>
    <property type="resolution" value="3.20 A"/>
    <property type="chains" value="T=1-100"/>
</dbReference>
<dbReference type="PDB" id="6YSU">
    <property type="method" value="EM"/>
    <property type="resolution" value="3.70 A"/>
    <property type="chains" value="T=1-100"/>
</dbReference>
<dbReference type="PDB" id="6ZTJ">
    <property type="method" value="EM"/>
    <property type="resolution" value="3.40 A"/>
    <property type="chains" value="BU=1-100"/>
</dbReference>
<dbReference type="PDB" id="6ZTL">
    <property type="method" value="EM"/>
    <property type="resolution" value="3.50 A"/>
    <property type="chains" value="BU=1-100"/>
</dbReference>
<dbReference type="PDB" id="6ZTM">
    <property type="method" value="EM"/>
    <property type="resolution" value="3.30 A"/>
    <property type="chains" value="BU=1-100"/>
</dbReference>
<dbReference type="PDB" id="6ZTN">
    <property type="method" value="EM"/>
    <property type="resolution" value="3.90 A"/>
    <property type="chains" value="BU=1-100"/>
</dbReference>
<dbReference type="PDB" id="6ZTO">
    <property type="method" value="EM"/>
    <property type="resolution" value="3.00 A"/>
    <property type="chains" value="BU=1-100"/>
</dbReference>
<dbReference type="PDB" id="6ZTP">
    <property type="method" value="EM"/>
    <property type="resolution" value="3.00 A"/>
    <property type="chains" value="BU=1-100"/>
</dbReference>
<dbReference type="PDB" id="6ZU1">
    <property type="method" value="EM"/>
    <property type="resolution" value="3.00 A"/>
    <property type="chains" value="BU=1-100"/>
</dbReference>
<dbReference type="PDB" id="7ABZ">
    <property type="method" value="EM"/>
    <property type="resolution" value="3.21 A"/>
    <property type="chains" value="T=1-93"/>
</dbReference>
<dbReference type="PDB" id="7AC7">
    <property type="method" value="EM"/>
    <property type="resolution" value="3.08 A"/>
    <property type="chains" value="T=1-94"/>
</dbReference>
<dbReference type="PDB" id="7ACJ">
    <property type="method" value="EM"/>
    <property type="resolution" value="3.20 A"/>
    <property type="chains" value="T=1-94"/>
</dbReference>
<dbReference type="PDB" id="7ACR">
    <property type="method" value="EM"/>
    <property type="resolution" value="3.44 A"/>
    <property type="chains" value="T=1-94"/>
</dbReference>
<dbReference type="PDB" id="7B5K">
    <property type="method" value="EM"/>
    <property type="resolution" value="2.90 A"/>
    <property type="chains" value="T=1-93"/>
</dbReference>
<dbReference type="PDB" id="7BL2">
    <property type="method" value="EM"/>
    <property type="resolution" value="3.70 A"/>
    <property type="chains" value="T=1-100"/>
</dbReference>
<dbReference type="PDB" id="7BL3">
    <property type="method" value="EM"/>
    <property type="resolution" value="3.50 A"/>
    <property type="chains" value="T=1-100"/>
</dbReference>
<dbReference type="PDB" id="7BL4">
    <property type="method" value="EM"/>
    <property type="resolution" value="2.40 A"/>
    <property type="chains" value="T=1-100"/>
</dbReference>
<dbReference type="PDB" id="7BL5">
    <property type="method" value="EM"/>
    <property type="resolution" value="3.30 A"/>
    <property type="chains" value="T=1-100"/>
</dbReference>
<dbReference type="PDB" id="7BL6">
    <property type="method" value="EM"/>
    <property type="resolution" value="4.00 A"/>
    <property type="chains" value="T=1-100"/>
</dbReference>
<dbReference type="PDB" id="7BV8">
    <property type="method" value="EM"/>
    <property type="resolution" value="3.14 A"/>
    <property type="chains" value="U=1-100"/>
</dbReference>
<dbReference type="PDB" id="7D6Z">
    <property type="method" value="EM"/>
    <property type="resolution" value="3.40 A"/>
    <property type="chains" value="Z=1-100"/>
</dbReference>
<dbReference type="PDB" id="7D80">
    <property type="method" value="EM"/>
    <property type="resolution" value="4.10 A"/>
    <property type="chains" value="W=1-100"/>
</dbReference>
<dbReference type="PDB" id="7JSS">
    <property type="method" value="EM"/>
    <property type="resolution" value="3.70 A"/>
    <property type="chains" value="t=1-93"/>
</dbReference>
<dbReference type="PDB" id="7JSW">
    <property type="method" value="EM"/>
    <property type="resolution" value="3.80 A"/>
    <property type="chains" value="t=1-93"/>
</dbReference>
<dbReference type="PDB" id="7JSZ">
    <property type="method" value="EM"/>
    <property type="resolution" value="3.70 A"/>
    <property type="chains" value="t=1-93"/>
</dbReference>
<dbReference type="PDB" id="7JT1">
    <property type="method" value="EM"/>
    <property type="resolution" value="3.30 A"/>
    <property type="chains" value="t=1-93"/>
</dbReference>
<dbReference type="PDB" id="7JT2">
    <property type="method" value="EM"/>
    <property type="resolution" value="3.50 A"/>
    <property type="chains" value="t=1-93"/>
</dbReference>
<dbReference type="PDB" id="7JT3">
    <property type="method" value="EM"/>
    <property type="resolution" value="3.70 A"/>
    <property type="chains" value="t=1-93"/>
</dbReference>
<dbReference type="PDB" id="7K00">
    <property type="method" value="EM"/>
    <property type="resolution" value="1.98 A"/>
    <property type="chains" value="s=1-100"/>
</dbReference>
<dbReference type="PDB" id="7K50">
    <property type="method" value="EM"/>
    <property type="resolution" value="3.40 A"/>
    <property type="chains" value="t=1-93"/>
</dbReference>
<dbReference type="PDB" id="7K51">
    <property type="method" value="EM"/>
    <property type="resolution" value="3.50 A"/>
    <property type="chains" value="t=1-93"/>
</dbReference>
<dbReference type="PDB" id="7K52">
    <property type="method" value="EM"/>
    <property type="resolution" value="3.40 A"/>
    <property type="chains" value="t=1-93"/>
</dbReference>
<dbReference type="PDB" id="7K53">
    <property type="method" value="EM"/>
    <property type="resolution" value="3.20 A"/>
    <property type="chains" value="t=1-93"/>
</dbReference>
<dbReference type="PDB" id="7K54">
    <property type="method" value="EM"/>
    <property type="resolution" value="3.20 A"/>
    <property type="chains" value="t=1-93"/>
</dbReference>
<dbReference type="PDB" id="7K55">
    <property type="method" value="EM"/>
    <property type="resolution" value="3.30 A"/>
    <property type="chains" value="t=1-93"/>
</dbReference>
<dbReference type="PDB" id="7LV0">
    <property type="method" value="EM"/>
    <property type="resolution" value="3.20 A"/>
    <property type="chains" value="t=1-93"/>
</dbReference>
<dbReference type="PDB" id="7LVK">
    <property type="method" value="EM"/>
    <property type="resolution" value="2.20 A"/>
    <property type="chains" value="b=1-100"/>
</dbReference>
<dbReference type="PDB" id="7M5D">
    <property type="method" value="EM"/>
    <property type="resolution" value="2.80 A"/>
    <property type="chains" value="T=1-94"/>
</dbReference>
<dbReference type="PDB" id="7N1P">
    <property type="method" value="EM"/>
    <property type="resolution" value="2.33 A"/>
    <property type="chains" value="LW=1-100"/>
</dbReference>
<dbReference type="PDB" id="7N2C">
    <property type="method" value="EM"/>
    <property type="resolution" value="2.72 A"/>
    <property type="chains" value="LW=1-100"/>
</dbReference>
<dbReference type="PDB" id="7N2U">
    <property type="method" value="EM"/>
    <property type="resolution" value="2.53 A"/>
    <property type="chains" value="LW=1-100"/>
</dbReference>
<dbReference type="PDB" id="7N2V">
    <property type="method" value="EM"/>
    <property type="resolution" value="2.54 A"/>
    <property type="chains" value="LW=1-100"/>
</dbReference>
<dbReference type="PDB" id="7N30">
    <property type="method" value="EM"/>
    <property type="resolution" value="2.66 A"/>
    <property type="chains" value="LW=1-100"/>
</dbReference>
<dbReference type="PDB" id="7N31">
    <property type="method" value="EM"/>
    <property type="resolution" value="2.69 A"/>
    <property type="chains" value="LW=1-100"/>
</dbReference>
<dbReference type="PDB" id="7NBU">
    <property type="method" value="EM"/>
    <property type="resolution" value="3.11 A"/>
    <property type="chains" value="s=1-93"/>
</dbReference>
<dbReference type="PDB" id="7NWT">
    <property type="method" value="EM"/>
    <property type="resolution" value="2.66 A"/>
    <property type="chains" value="T=1-100"/>
</dbReference>
<dbReference type="PDB" id="7O19">
    <property type="method" value="EM"/>
    <property type="resolution" value="2.90 A"/>
    <property type="chains" value="BT=1-100"/>
</dbReference>
<dbReference type="PDB" id="7O1A">
    <property type="method" value="EM"/>
    <property type="resolution" value="2.40 A"/>
    <property type="chains" value="BT=1-100"/>
</dbReference>
<dbReference type="PDB" id="7O1C">
    <property type="method" value="EM"/>
    <property type="resolution" value="2.60 A"/>
    <property type="chains" value="BT=1-100"/>
</dbReference>
<dbReference type="PDB" id="7ODE">
    <property type="method" value="EM"/>
    <property type="resolution" value="2.84 A"/>
    <property type="chains" value="b=1-100"/>
</dbReference>
<dbReference type="PDB" id="7OIZ">
    <property type="method" value="EM"/>
    <property type="resolution" value="2.90 A"/>
    <property type="chains" value="s=1-100"/>
</dbReference>
<dbReference type="PDB" id="7OJ0">
    <property type="method" value="EM"/>
    <property type="resolution" value="3.50 A"/>
    <property type="chains" value="s=1-100"/>
</dbReference>
<dbReference type="PDB" id="7P3K">
    <property type="method" value="EM"/>
    <property type="resolution" value="2.90 A"/>
    <property type="chains" value="s=1-100"/>
</dbReference>
<dbReference type="PDB" id="7PJS">
    <property type="method" value="EM"/>
    <property type="resolution" value="2.35 A"/>
    <property type="chains" value="T=1-100"/>
</dbReference>
<dbReference type="PDB" id="7PJT">
    <property type="method" value="EM"/>
    <property type="resolution" value="6.00 A"/>
    <property type="chains" value="T=1-100"/>
</dbReference>
<dbReference type="PDB" id="7PJU">
    <property type="method" value="EM"/>
    <property type="resolution" value="9.50 A"/>
    <property type="chains" value="T=1-100"/>
</dbReference>
<dbReference type="PDB" id="7PJV">
    <property type="method" value="EM"/>
    <property type="resolution" value="3.10 A"/>
    <property type="chains" value="T=1-100"/>
</dbReference>
<dbReference type="PDB" id="7PJW">
    <property type="method" value="EM"/>
    <property type="resolution" value="4.00 A"/>
    <property type="chains" value="T=1-100"/>
</dbReference>
<dbReference type="PDB" id="7PJX">
    <property type="method" value="EM"/>
    <property type="resolution" value="6.50 A"/>
    <property type="chains" value="T=1-100"/>
</dbReference>
<dbReference type="PDB" id="7PJY">
    <property type="method" value="EM"/>
    <property type="resolution" value="3.10 A"/>
    <property type="chains" value="T=1-100"/>
</dbReference>
<dbReference type="PDB" id="7PJZ">
    <property type="method" value="EM"/>
    <property type="resolution" value="6.00 A"/>
    <property type="chains" value="T=1-100"/>
</dbReference>
<dbReference type="PDB" id="7Q4K">
    <property type="method" value="EM"/>
    <property type="resolution" value="3.00 A"/>
    <property type="chains" value="BT=1-100"/>
</dbReference>
<dbReference type="PDB" id="7QG8">
    <property type="method" value="EM"/>
    <property type="resolution" value="3.97 A"/>
    <property type="chains" value="g=1-100"/>
</dbReference>
<dbReference type="PDB" id="7QGH">
    <property type="method" value="EM"/>
    <property type="resolution" value="4.48 A"/>
    <property type="chains" value="g=1-100"/>
</dbReference>
<dbReference type="PDB" id="7QGN">
    <property type="method" value="EM"/>
    <property type="resolution" value="3.37 A"/>
    <property type="chains" value="g=1-100"/>
</dbReference>
<dbReference type="PDB" id="7QGR">
    <property type="method" value="EM"/>
    <property type="resolution" value="5.70 A"/>
    <property type="chains" value="g=1-100"/>
</dbReference>
<dbReference type="PDB" id="7QQ3">
    <property type="method" value="EM"/>
    <property type="resolution" value="2.10 A"/>
    <property type="chains" value="b=1-100"/>
</dbReference>
<dbReference type="PDB" id="7S1G">
    <property type="method" value="EM"/>
    <property type="resolution" value="2.48 A"/>
    <property type="chains" value="b=1-100"/>
</dbReference>
<dbReference type="PDB" id="7S1H">
    <property type="method" value="EM"/>
    <property type="resolution" value="2.35 A"/>
    <property type="chains" value="b=1-100"/>
</dbReference>
<dbReference type="PDB" id="7S1I">
    <property type="method" value="EM"/>
    <property type="resolution" value="2.48 A"/>
    <property type="chains" value="b=1-100"/>
</dbReference>
<dbReference type="PDB" id="7S1J">
    <property type="method" value="EM"/>
    <property type="resolution" value="2.47 A"/>
    <property type="chains" value="b=1-100"/>
</dbReference>
<dbReference type="PDB" id="7S1K">
    <property type="method" value="EM"/>
    <property type="resolution" value="2.42 A"/>
    <property type="chains" value="b=1-100"/>
</dbReference>
<dbReference type="PDB" id="7SA4">
    <property type="method" value="EM"/>
    <property type="resolution" value="2.55 A"/>
    <property type="chains" value="T=1-100"/>
</dbReference>
<dbReference type="PDB" id="7SS9">
    <property type="method" value="EM"/>
    <property type="resolution" value="3.90 A"/>
    <property type="chains" value="t=1-93"/>
</dbReference>
<dbReference type="PDB" id="7SSD">
    <property type="method" value="EM"/>
    <property type="resolution" value="3.30 A"/>
    <property type="chains" value="t=1-93"/>
</dbReference>
<dbReference type="PDB" id="7SSL">
    <property type="method" value="EM"/>
    <property type="resolution" value="3.80 A"/>
    <property type="chains" value="t=1-93"/>
</dbReference>
<dbReference type="PDB" id="7SSN">
    <property type="method" value="EM"/>
    <property type="resolution" value="3.20 A"/>
    <property type="chains" value="t=1-93"/>
</dbReference>
<dbReference type="PDB" id="7SSO">
    <property type="method" value="EM"/>
    <property type="resolution" value="3.20 A"/>
    <property type="chains" value="t=1-93"/>
</dbReference>
<dbReference type="PDB" id="7SSW">
    <property type="method" value="EM"/>
    <property type="resolution" value="3.80 A"/>
    <property type="chains" value="t=1-93"/>
</dbReference>
<dbReference type="PDB" id="7ST2">
    <property type="method" value="EM"/>
    <property type="resolution" value="2.90 A"/>
    <property type="chains" value="t=1-93"/>
</dbReference>
<dbReference type="PDB" id="7ST6">
    <property type="method" value="EM"/>
    <property type="resolution" value="3.00 A"/>
    <property type="chains" value="t=1-93"/>
</dbReference>
<dbReference type="PDB" id="7ST7">
    <property type="method" value="EM"/>
    <property type="resolution" value="3.20 A"/>
    <property type="chains" value="t=1-93"/>
</dbReference>
<dbReference type="PDB" id="7TOS">
    <property type="method" value="EM"/>
    <property type="resolution" value="2.90 A"/>
    <property type="chains" value="L23=1-93"/>
</dbReference>
<dbReference type="PDB" id="7UG7">
    <property type="method" value="EM"/>
    <property type="resolution" value="2.58 A"/>
    <property type="chains" value="LW=1-100"/>
</dbReference>
<dbReference type="PDB" id="7UPH">
    <property type="method" value="EM"/>
    <property type="resolution" value="4.18 A"/>
    <property type="chains" value="s=1-93"/>
</dbReference>
<dbReference type="PDB" id="7Y7C">
    <property type="method" value="EM"/>
    <property type="resolution" value="2.51 A"/>
    <property type="chains" value="s=1-100"/>
</dbReference>
<dbReference type="PDB" id="7Y7D">
    <property type="method" value="EM"/>
    <property type="resolution" value="2.58 A"/>
    <property type="chains" value="s=1-100"/>
</dbReference>
<dbReference type="PDB" id="7Y7E">
    <property type="method" value="EM"/>
    <property type="resolution" value="2.41 A"/>
    <property type="chains" value="s=1-100"/>
</dbReference>
<dbReference type="PDB" id="7Y7F">
    <property type="method" value="EM"/>
    <property type="resolution" value="2.43 A"/>
    <property type="chains" value="s=1-100"/>
</dbReference>
<dbReference type="PDB" id="7Y7G">
    <property type="method" value="EM"/>
    <property type="resolution" value="2.34 A"/>
    <property type="chains" value="s=1-100"/>
</dbReference>
<dbReference type="PDB" id="7Y7H">
    <property type="method" value="EM"/>
    <property type="resolution" value="2.51 A"/>
    <property type="chains" value="s=1-100"/>
</dbReference>
<dbReference type="PDB" id="7YLA">
    <property type="method" value="EM"/>
    <property type="resolution" value="2.52 A"/>
    <property type="chains" value="b=1-93"/>
</dbReference>
<dbReference type="PDB" id="7ZP8">
    <property type="method" value="EM"/>
    <property type="resolution" value="2.20 A"/>
    <property type="chains" value="t=1-100"/>
</dbReference>
<dbReference type="PDB" id="7ZQ5">
    <property type="method" value="EM"/>
    <property type="resolution" value="2.70 A"/>
    <property type="chains" value="t=1-100"/>
</dbReference>
<dbReference type="PDB" id="7ZQ6">
    <property type="method" value="EM"/>
    <property type="resolution" value="2.75 A"/>
    <property type="chains" value="t=1-100"/>
</dbReference>
<dbReference type="PDB" id="7ZTA">
    <property type="method" value="EM"/>
    <property type="resolution" value="2.70 A"/>
    <property type="chains" value="L231=1-93"/>
</dbReference>
<dbReference type="PDB" id="8A3L">
    <property type="method" value="EM"/>
    <property type="resolution" value="3.42 A"/>
    <property type="chains" value="s=1-100"/>
</dbReference>
<dbReference type="PDB" id="8AKN">
    <property type="method" value="EM"/>
    <property type="resolution" value="2.30 A"/>
    <property type="chains" value="s=1-100"/>
</dbReference>
<dbReference type="PDB" id="8AM9">
    <property type="method" value="EM"/>
    <property type="resolution" value="2.80 A"/>
    <property type="chains" value="s=1-100"/>
</dbReference>
<dbReference type="PDB" id="8ANA">
    <property type="method" value="EM"/>
    <property type="resolution" value="2.10 A"/>
    <property type="chains" value="s=1-100"/>
</dbReference>
<dbReference type="PDB" id="8AP4">
    <property type="method" value="EM"/>
    <property type="resolution" value="3.00 A"/>
    <property type="chains" value="s=1-100"/>
</dbReference>
<dbReference type="PDB" id="8AYE">
    <property type="method" value="EM"/>
    <property type="resolution" value="1.96 A"/>
    <property type="chains" value="s=1-100"/>
</dbReference>
<dbReference type="PDB" id="8B0X">
    <property type="method" value="EM"/>
    <property type="resolution" value="1.55 A"/>
    <property type="chains" value="s=1-100"/>
</dbReference>
<dbReference type="PDB" id="8B7Y">
    <property type="method" value="EM"/>
    <property type="resolution" value="3.00 A"/>
    <property type="chains" value="b=1-100"/>
</dbReference>
<dbReference type="PDB" id="8BF7">
    <property type="method" value="EM"/>
    <property type="resolution" value="2.33 A"/>
    <property type="chains" value="Q=1-100"/>
</dbReference>
<dbReference type="PDB" id="8BGE">
    <property type="method" value="EM"/>
    <property type="resolution" value="2.11 A"/>
    <property type="chains" value="Q=1-100"/>
</dbReference>
<dbReference type="PDB" id="8BGH">
    <property type="method" value="EM"/>
    <property type="resolution" value="2.88 A"/>
    <property type="chains" value="Q=1-100"/>
</dbReference>
<dbReference type="PDB" id="8BH4">
    <property type="method" value="EM"/>
    <property type="resolution" value="2.62 A"/>
    <property type="chains" value="Q=1-100"/>
</dbReference>
<dbReference type="PDB" id="8BHJ">
    <property type="method" value="EM"/>
    <property type="resolution" value="2.81 A"/>
    <property type="chains" value="Q=1-100"/>
</dbReference>
<dbReference type="PDB" id="8BHL">
    <property type="method" value="EM"/>
    <property type="resolution" value="2.21 A"/>
    <property type="chains" value="Q=1-100"/>
</dbReference>
<dbReference type="PDB" id="8BHN">
    <property type="method" value="EM"/>
    <property type="resolution" value="2.85 A"/>
    <property type="chains" value="Q=1-100"/>
</dbReference>
<dbReference type="PDB" id="8BHP">
    <property type="method" value="EM"/>
    <property type="resolution" value="2.37 A"/>
    <property type="chains" value="Q=1-100"/>
</dbReference>
<dbReference type="PDB" id="8BIL">
    <property type="method" value="EM"/>
    <property type="resolution" value="2.04 A"/>
    <property type="chains" value="Q=1-100"/>
</dbReference>
<dbReference type="PDB" id="8BIM">
    <property type="method" value="EM"/>
    <property type="resolution" value="2.04 A"/>
    <property type="chains" value="Q=1-100"/>
</dbReference>
<dbReference type="PDB" id="8C8X">
    <property type="method" value="EM"/>
    <property type="resolution" value="3.93 A"/>
    <property type="chains" value="T=1-100"/>
</dbReference>
<dbReference type="PDB" id="8C8Y">
    <property type="method" value="EM"/>
    <property type="resolution" value="3.03 A"/>
    <property type="chains" value="T=1-100"/>
</dbReference>
<dbReference type="PDB" id="8C8Z">
    <property type="method" value="EM"/>
    <property type="resolution" value="3.12 A"/>
    <property type="chains" value="T=1-100"/>
</dbReference>
<dbReference type="PDB" id="8C90">
    <property type="method" value="EM"/>
    <property type="resolution" value="3.15 A"/>
    <property type="chains" value="T=1-100"/>
</dbReference>
<dbReference type="PDB" id="8C91">
    <property type="method" value="EM"/>
    <property type="resolution" value="4.19 A"/>
    <property type="chains" value="T=1-100"/>
</dbReference>
<dbReference type="PDB" id="8C92">
    <property type="method" value="EM"/>
    <property type="resolution" value="3.79 A"/>
    <property type="chains" value="T=1-100"/>
</dbReference>
<dbReference type="PDB" id="8C93">
    <property type="method" value="EM"/>
    <property type="resolution" value="4.17 A"/>
    <property type="chains" value="T=1-100"/>
</dbReference>
<dbReference type="PDB" id="8C97">
    <property type="method" value="EM"/>
    <property type="resolution" value="4.07 A"/>
    <property type="chains" value="T=1-100"/>
</dbReference>
<dbReference type="PDB" id="8C98">
    <property type="method" value="EM"/>
    <property type="resolution" value="3.66 A"/>
    <property type="chains" value="T=1-100"/>
</dbReference>
<dbReference type="PDB" id="8C9A">
    <property type="method" value="EM"/>
    <property type="resolution" value="4.86 A"/>
    <property type="chains" value="T=1-100"/>
</dbReference>
<dbReference type="PDB" id="8CAM">
    <property type="method" value="EM"/>
    <property type="resolution" value="1.86 A"/>
    <property type="chains" value="s=1-100"/>
</dbReference>
<dbReference type="PDB" id="8CEU">
    <property type="method" value="EM"/>
    <property type="resolution" value="1.83 A"/>
    <property type="chains" value="s=1-100"/>
</dbReference>
<dbReference type="PDB" id="8CGD">
    <property type="method" value="EM"/>
    <property type="resolution" value="1.98 A"/>
    <property type="chains" value="s=1-100"/>
</dbReference>
<dbReference type="PDB" id="8CGK">
    <property type="method" value="EM"/>
    <property type="resolution" value="1.64 A"/>
    <property type="chains" value="s=1-100"/>
</dbReference>
<dbReference type="PDB" id="8CGV">
    <property type="method" value="EM"/>
    <property type="resolution" value="1.66 A"/>
    <property type="chains" value="s=1-100"/>
</dbReference>
<dbReference type="PDB" id="8EIU">
    <property type="method" value="EM"/>
    <property type="resolution" value="2.24 A"/>
    <property type="chains" value="s=1-100"/>
</dbReference>
<dbReference type="PDB" id="8EKC">
    <property type="method" value="EM"/>
    <property type="resolution" value="2.70 A"/>
    <property type="chains" value="V=1-100"/>
</dbReference>
<dbReference type="PDB" id="8EMM">
    <property type="method" value="EM"/>
    <property type="resolution" value="2.10 A"/>
    <property type="chains" value="s=1-100"/>
</dbReference>
<dbReference type="PDB" id="8FIZ">
    <property type="method" value="EM"/>
    <property type="resolution" value="3.80 A"/>
    <property type="chains" value="DA=1-100"/>
</dbReference>
<dbReference type="PDB" id="8FTO">
    <property type="method" value="EM"/>
    <property type="resolution" value="1.85 A"/>
    <property type="chains" value="s=1-100"/>
</dbReference>
<dbReference type="PDB" id="8FZD">
    <property type="method" value="EM"/>
    <property type="resolution" value="3.10 A"/>
    <property type="chains" value="V=1-100"/>
</dbReference>
<dbReference type="PDB" id="8FZE">
    <property type="method" value="EM"/>
    <property type="resolution" value="3.00 A"/>
    <property type="chains" value="V=1-100"/>
</dbReference>
<dbReference type="PDB" id="8FZF">
    <property type="method" value="EM"/>
    <property type="resolution" value="3.20 A"/>
    <property type="chains" value="V=1-100"/>
</dbReference>
<dbReference type="PDB" id="8FZG">
    <property type="method" value="EM"/>
    <property type="resolution" value="3.10 A"/>
    <property type="chains" value="V=1-100"/>
</dbReference>
<dbReference type="PDB" id="8FZH">
    <property type="method" value="EM"/>
    <property type="resolution" value="2.90 A"/>
    <property type="chains" value="V=1-100"/>
</dbReference>
<dbReference type="PDB" id="8FZI">
    <property type="method" value="EM"/>
    <property type="resolution" value="3.10 A"/>
    <property type="chains" value="V=1-100"/>
</dbReference>
<dbReference type="PDB" id="8FZJ">
    <property type="method" value="EM"/>
    <property type="resolution" value="3.00 A"/>
    <property type="chains" value="V=1-100"/>
</dbReference>
<dbReference type="PDB" id="8G2U">
    <property type="method" value="EM"/>
    <property type="resolution" value="3.00 A"/>
    <property type="chains" value="T=1-94"/>
</dbReference>
<dbReference type="PDB" id="8G31">
    <property type="method" value="EM"/>
    <property type="resolution" value="3.20 A"/>
    <property type="chains" value="T=1-94"/>
</dbReference>
<dbReference type="PDB" id="8G34">
    <property type="method" value="EM"/>
    <property type="resolution" value="3.20 A"/>
    <property type="chains" value="T=1-94"/>
</dbReference>
<dbReference type="PDB" id="8G38">
    <property type="method" value="EM"/>
    <property type="resolution" value="3.20 A"/>
    <property type="chains" value="T=1-94"/>
</dbReference>
<dbReference type="PDB" id="8G6W">
    <property type="method" value="EM"/>
    <property type="resolution" value="2.02 A"/>
    <property type="chains" value="s=1-100"/>
</dbReference>
<dbReference type="PDB" id="8G6X">
    <property type="method" value="EM"/>
    <property type="resolution" value="2.31 A"/>
    <property type="chains" value="s=1-100"/>
</dbReference>
<dbReference type="PDB" id="8G6Y">
    <property type="method" value="EM"/>
    <property type="resolution" value="2.09 A"/>
    <property type="chains" value="s=1-100"/>
</dbReference>
<dbReference type="PDB" id="8G7P">
    <property type="method" value="EM"/>
    <property type="resolution" value="2.90 A"/>
    <property type="chains" value="V=1-100"/>
</dbReference>
<dbReference type="PDB" id="8G7Q">
    <property type="method" value="EM"/>
    <property type="resolution" value="3.10 A"/>
    <property type="chains" value="V=1-100"/>
</dbReference>
<dbReference type="PDB" id="8G7R">
    <property type="method" value="EM"/>
    <property type="resolution" value="2.80 A"/>
    <property type="chains" value="V=1-100"/>
</dbReference>
<dbReference type="PDB" id="8G7S">
    <property type="method" value="EM"/>
    <property type="resolution" value="3.10 A"/>
    <property type="chains" value="V=1-100"/>
</dbReference>
<dbReference type="PDB" id="8HSP">
    <property type="method" value="EM"/>
    <property type="resolution" value="2.32 A"/>
    <property type="chains" value="s=1-100"/>
</dbReference>
<dbReference type="PDB" id="8HTZ">
    <property type="method" value="EM"/>
    <property type="resolution" value="2.40 A"/>
    <property type="chains" value="s=1-100"/>
</dbReference>
<dbReference type="PDB" id="8HU1">
    <property type="method" value="EM"/>
    <property type="resolution" value="2.69 A"/>
    <property type="chains" value="s=1-100"/>
</dbReference>
<dbReference type="PDB" id="8IFB">
    <property type="method" value="EM"/>
    <property type="resolution" value="2.43 A"/>
    <property type="chains" value="s=1-100"/>
</dbReference>
<dbReference type="PDB" id="8IFC">
    <property type="method" value="EM"/>
    <property type="resolution" value="2.90 A"/>
    <property type="chains" value="s=1-100"/>
</dbReference>
<dbReference type="PDB" id="8J1Z">
    <property type="method" value="EM"/>
    <property type="resolution" value="2.60 A"/>
    <property type="chains" value="s=1-100"/>
</dbReference>
<dbReference type="PDB" id="8P16">
    <property type="method" value="EM"/>
    <property type="resolution" value="2.77 A"/>
    <property type="chains" value="T=1-100"/>
</dbReference>
<dbReference type="PDB" id="8P17">
    <property type="method" value="EM"/>
    <property type="resolution" value="2.78 A"/>
    <property type="chains" value="T=1-100"/>
</dbReference>
<dbReference type="PDB" id="8P18">
    <property type="method" value="EM"/>
    <property type="resolution" value="2.77 A"/>
    <property type="chains" value="T=1-100"/>
</dbReference>
<dbReference type="PDB" id="8PEG">
    <property type="method" value="EM"/>
    <property type="resolution" value="3.30 A"/>
    <property type="chains" value="w=1-100"/>
</dbReference>
<dbReference type="PDB" id="8PHJ">
    <property type="method" value="EM"/>
    <property type="resolution" value="3.67 A"/>
    <property type="chains" value="s=1-100"/>
</dbReference>
<dbReference type="PDB" id="8PKL">
    <property type="method" value="EM"/>
    <property type="resolution" value="3.09 A"/>
    <property type="chains" value="w=1-100"/>
</dbReference>
<dbReference type="PDB" id="8PVA">
    <property type="method" value="EM"/>
    <property type="resolution" value="4.50 A"/>
    <property type="chains" value="s=1-100"/>
</dbReference>
<dbReference type="PDB" id="8Q4F">
    <property type="method" value="EM"/>
    <property type="resolution" value="3.10 A"/>
    <property type="chains" value="s=1-100"/>
</dbReference>
<dbReference type="PDB" id="8QBT">
    <property type="method" value="EM"/>
    <property type="resolution" value="2.20 A"/>
    <property type="chains" value="T=1-100"/>
</dbReference>
<dbReference type="PDB" id="8QK7">
    <property type="method" value="EM"/>
    <property type="resolution" value="2.77 A"/>
    <property type="chains" value="T=1-100"/>
</dbReference>
<dbReference type="PDB" id="8QOA">
    <property type="method" value="EM"/>
    <property type="resolution" value="2.00 A"/>
    <property type="chains" value="s=1-100"/>
</dbReference>
<dbReference type="PDB" id="8R6C">
    <property type="method" value="EM"/>
    <property type="resolution" value="2.20 A"/>
    <property type="chains" value="s=1-100"/>
</dbReference>
<dbReference type="PDB" id="8R8M">
    <property type="method" value="EM"/>
    <property type="resolution" value="2.40 A"/>
    <property type="chains" value="s=1-100"/>
</dbReference>
<dbReference type="PDB" id="8RPY">
    <property type="method" value="EM"/>
    <property type="resolution" value="2.64 A"/>
    <property type="chains" value="T=1-93"/>
</dbReference>
<dbReference type="PDB" id="8RPZ">
    <property type="method" value="EM"/>
    <property type="resolution" value="2.44 A"/>
    <property type="chains" value="T=1-93"/>
</dbReference>
<dbReference type="PDB" id="8RQ0">
    <property type="method" value="EM"/>
    <property type="resolution" value="2.44 A"/>
    <property type="chains" value="T=1-93"/>
</dbReference>
<dbReference type="PDB" id="8RQ2">
    <property type="method" value="EM"/>
    <property type="resolution" value="2.44 A"/>
    <property type="chains" value="T=1-93"/>
</dbReference>
<dbReference type="PDB" id="8SYL">
    <property type="method" value="EM"/>
    <property type="resolution" value="2.90 A"/>
    <property type="chains" value="V=1-100"/>
</dbReference>
<dbReference type="PDB" id="8T5D">
    <property type="method" value="EM"/>
    <property type="resolution" value="3.20 A"/>
    <property type="chains" value="T=1-94"/>
</dbReference>
<dbReference type="PDB" id="8T5H">
    <property type="method" value="EM"/>
    <property type="resolution" value="3.30 A"/>
    <property type="chains" value="T=1-94"/>
</dbReference>
<dbReference type="PDB" id="8UPO">
    <property type="method" value="EM"/>
    <property type="resolution" value="5.50 A"/>
    <property type="chains" value="2=1-100"/>
</dbReference>
<dbReference type="PDB" id="8UPR">
    <property type="method" value="EM"/>
    <property type="resolution" value="5.30 A"/>
    <property type="chains" value="2=1-100"/>
</dbReference>
<dbReference type="PDB" id="8UQL">
    <property type="method" value="EM"/>
    <property type="resolution" value="3.20 A"/>
    <property type="chains" value="2=1-100"/>
</dbReference>
<dbReference type="PDB" id="8UQM">
    <property type="method" value="EM"/>
    <property type="resolution" value="5.30 A"/>
    <property type="chains" value="2=1-100"/>
</dbReference>
<dbReference type="PDB" id="8UQP">
    <property type="method" value="EM"/>
    <property type="resolution" value="3.80 A"/>
    <property type="chains" value="2=1-100"/>
</dbReference>
<dbReference type="PDB" id="8UR0">
    <property type="method" value="EM"/>
    <property type="resolution" value="3.40 A"/>
    <property type="chains" value="2=1-100"/>
</dbReference>
<dbReference type="PDB" id="8URH">
    <property type="method" value="EM"/>
    <property type="resolution" value="5.70 A"/>
    <property type="chains" value="2=1-100"/>
</dbReference>
<dbReference type="PDB" id="8URI">
    <property type="method" value="EM"/>
    <property type="resolution" value="5.30 A"/>
    <property type="chains" value="2=1-100"/>
</dbReference>
<dbReference type="PDB" id="8URX">
    <property type="method" value="EM"/>
    <property type="resolution" value="6.60 A"/>
    <property type="chains" value="2=1-100"/>
</dbReference>
<dbReference type="PDB" id="8URY">
    <property type="method" value="EM"/>
    <property type="resolution" value="3.10 A"/>
    <property type="chains" value="2=1-100"/>
</dbReference>
<dbReference type="PDB" id="8VS9">
    <property type="method" value="EM"/>
    <property type="resolution" value="3.90 A"/>
    <property type="chains" value="L23=1-100"/>
</dbReference>
<dbReference type="PDB" id="8VSA">
    <property type="method" value="EM"/>
    <property type="resolution" value="3.70 A"/>
    <property type="chains" value="L23=1-100"/>
</dbReference>
<dbReference type="PDB" id="8W51">
    <property type="method" value="EM"/>
    <property type="resolution" value="2.40 A"/>
    <property type="chains" value="U=1-100"/>
</dbReference>
<dbReference type="PDB" id="8YUO">
    <property type="method" value="EM"/>
    <property type="resolution" value="2.25 A"/>
    <property type="chains" value="s=1-100"/>
</dbReference>
<dbReference type="PDB" id="8YUP">
    <property type="method" value="EM"/>
    <property type="resolution" value="2.39 A"/>
    <property type="chains" value="s=1-100"/>
</dbReference>
<dbReference type="PDB" id="8YUQ">
    <property type="method" value="EM"/>
    <property type="resolution" value="2.41 A"/>
    <property type="chains" value="s=1-100"/>
</dbReference>
<dbReference type="PDB" id="8YUR">
    <property type="method" value="EM"/>
    <property type="resolution" value="2.47 A"/>
    <property type="chains" value="s=1-100"/>
</dbReference>
<dbReference type="PDB" id="8YUS">
    <property type="method" value="EM"/>
    <property type="resolution" value="2.43 A"/>
    <property type="chains" value="s=1-100"/>
</dbReference>
<dbReference type="PDB" id="9CL9">
    <property type="method" value="EM"/>
    <property type="resolution" value="5.04 A"/>
    <property type="chains" value="T=4-93"/>
</dbReference>
<dbReference type="PDB" id="9D89">
    <property type="method" value="EM"/>
    <property type="resolution" value="1.95 A"/>
    <property type="chains" value="K=1-93"/>
</dbReference>
<dbReference type="PDB" id="9DYG">
    <property type="method" value="EM"/>
    <property type="resolution" value="5.27 A"/>
    <property type="chains" value="T=1-93"/>
</dbReference>
<dbReference type="PDB" id="9FBV">
    <property type="method" value="EM"/>
    <property type="resolution" value="2.40 A"/>
    <property type="chains" value="s=1-100"/>
</dbReference>
<dbReference type="PDB" id="9GFT">
    <property type="method" value="EM"/>
    <property type="resolution" value="3.10 A"/>
    <property type="chains" value="Ao/g=1-100"/>
</dbReference>
<dbReference type="PDB" id="9GGR">
    <property type="method" value="EM"/>
    <property type="resolution" value="3.20 A"/>
    <property type="chains" value="Ao/g=1-100"/>
</dbReference>
<dbReference type="PDB" id="9H3M">
    <property type="method" value="EM"/>
    <property type="resolution" value="4.41 A"/>
    <property type="chains" value="T=1-93"/>
</dbReference>
<dbReference type="PDB" id="9H3N">
    <property type="method" value="EM"/>
    <property type="resolution" value="3.69 A"/>
    <property type="chains" value="T=1-93"/>
</dbReference>
<dbReference type="PDB" id="9H3O">
    <property type="method" value="EM"/>
    <property type="resolution" value="4.54 A"/>
    <property type="chains" value="T=1-93"/>
</dbReference>
<dbReference type="PDB" id="9H3P">
    <property type="method" value="EM"/>
    <property type="resolution" value="7.06 A"/>
    <property type="chains" value="T=1-93"/>
</dbReference>
<dbReference type="PDB" id="9H3Q">
    <property type="method" value="EM"/>
    <property type="resolution" value="4.02 A"/>
    <property type="chains" value="T=1-93"/>
</dbReference>
<dbReference type="PDB" id="9H3R">
    <property type="method" value="EM"/>
    <property type="resolution" value="4.12 A"/>
    <property type="chains" value="T=1-93"/>
</dbReference>
<dbReference type="PDB" id="9H3S">
    <property type="method" value="EM"/>
    <property type="resolution" value="4.16 A"/>
    <property type="chains" value="T=1-93"/>
</dbReference>
<dbReference type="PDB" id="9H3T">
    <property type="method" value="EM"/>
    <property type="resolution" value="3.85 A"/>
    <property type="chains" value="T=1-93"/>
</dbReference>
<dbReference type="PDB" id="9H3U">
    <property type="method" value="EM"/>
    <property type="resolution" value="3.47 A"/>
    <property type="chains" value="T=1-93"/>
</dbReference>
<dbReference type="PDB" id="9H3V">
    <property type="method" value="EM"/>
    <property type="resolution" value="3.55 A"/>
    <property type="chains" value="T=1-93"/>
</dbReference>
<dbReference type="PDB" id="9H3W">
    <property type="method" value="EM"/>
    <property type="resolution" value="5.38 A"/>
    <property type="chains" value="T=1-93"/>
</dbReference>
<dbReference type="PDB" id="9H3X">
    <property type="method" value="EM"/>
    <property type="resolution" value="4.12 A"/>
    <property type="chains" value="T=1-93"/>
</dbReference>
<dbReference type="PDB" id="9H3Y">
    <property type="method" value="EM"/>
    <property type="resolution" value="3.09 A"/>
    <property type="chains" value="T=1-93"/>
</dbReference>
<dbReference type="PDB" id="9H3Z">
    <property type="method" value="EM"/>
    <property type="resolution" value="2.98 A"/>
    <property type="chains" value="T=1-93"/>
</dbReference>
<dbReference type="PDB" id="9HA1">
    <property type="method" value="EM"/>
    <property type="resolution" value="4.17 A"/>
    <property type="chains" value="T=1-93"/>
</dbReference>
<dbReference type="PDB" id="9HA2">
    <property type="method" value="EM"/>
    <property type="resolution" value="4.17 A"/>
    <property type="chains" value="T=1-93"/>
</dbReference>
<dbReference type="PDB" id="9HA3">
    <property type="method" value="EM"/>
    <property type="resolution" value="3.62 A"/>
    <property type="chains" value="T=1-93"/>
</dbReference>
<dbReference type="PDB" id="9HA4">
    <property type="method" value="EM"/>
    <property type="resolution" value="4.26 A"/>
    <property type="chains" value="T=1-93"/>
</dbReference>
<dbReference type="PDB" id="9HA5">
    <property type="method" value="EM"/>
    <property type="resolution" value="3.30 A"/>
    <property type="chains" value="T=1-93"/>
</dbReference>
<dbReference type="PDB" id="9HA6">
    <property type="method" value="EM"/>
    <property type="resolution" value="3.08 A"/>
    <property type="chains" value="T=1-93"/>
</dbReference>
<dbReference type="PDB" id="9HA7">
    <property type="method" value="EM"/>
    <property type="resolution" value="4.37 A"/>
    <property type="chains" value="T=1-93"/>
</dbReference>
<dbReference type="PDB" id="9HAI">
    <property type="method" value="EM"/>
    <property type="resolution" value="3.01 A"/>
    <property type="chains" value="T=1-93"/>
</dbReference>
<dbReference type="PDB" id="9MOR">
    <property type="method" value="EM"/>
    <property type="resolution" value="2.65 A"/>
    <property type="chains" value="T=1-100"/>
</dbReference>
<dbReference type="PDB" id="9MQ4">
    <property type="method" value="EM"/>
    <property type="resolution" value="2.78 A"/>
    <property type="chains" value="T=1-100"/>
</dbReference>
<dbReference type="PDBsum" id="1ML5"/>
<dbReference type="PDBsum" id="2J28"/>
<dbReference type="PDBsum" id="2RDO"/>
<dbReference type="PDBsum" id="2VRH"/>
<dbReference type="PDBsum" id="3BBX"/>
<dbReference type="PDBsum" id="3IY9"/>
<dbReference type="PDBsum" id="3J45"/>
<dbReference type="PDBsum" id="3J46"/>
<dbReference type="PDBsum" id="3J5L"/>
<dbReference type="PDBsum" id="3J7Z"/>
<dbReference type="PDBsum" id="3J8G"/>
<dbReference type="PDBsum" id="3J9Y"/>
<dbReference type="PDBsum" id="3J9Z"/>
<dbReference type="PDBsum" id="3JA1"/>
<dbReference type="PDBsum" id="3JBU"/>
<dbReference type="PDBsum" id="3JBV"/>
<dbReference type="PDBsum" id="3JCD"/>
<dbReference type="PDBsum" id="3JCE"/>
<dbReference type="PDBsum" id="3JCJ"/>
<dbReference type="PDBsum" id="3JCN"/>
<dbReference type="PDBsum" id="4CSU"/>
<dbReference type="PDBsum" id="4U1U"/>
<dbReference type="PDBsum" id="4U1V"/>
<dbReference type="PDBsum" id="4U20"/>
<dbReference type="PDBsum" id="4U24"/>
<dbReference type="PDBsum" id="4U25"/>
<dbReference type="PDBsum" id="4U26"/>
<dbReference type="PDBsum" id="4U27"/>
<dbReference type="PDBsum" id="4UY8"/>
<dbReference type="PDBsum" id="4V47"/>
<dbReference type="PDBsum" id="4V48"/>
<dbReference type="PDBsum" id="4V4H"/>
<dbReference type="PDBsum" id="4V4Q"/>
<dbReference type="PDBsum" id="4V4V"/>
<dbReference type="PDBsum" id="4V4W"/>
<dbReference type="PDBsum" id="4V50"/>
<dbReference type="PDBsum" id="4V52"/>
<dbReference type="PDBsum" id="4V53"/>
<dbReference type="PDBsum" id="4V54"/>
<dbReference type="PDBsum" id="4V55"/>
<dbReference type="PDBsum" id="4V56"/>
<dbReference type="PDBsum" id="4V57"/>
<dbReference type="PDBsum" id="4V5B"/>
<dbReference type="PDBsum" id="4V5H"/>
<dbReference type="PDBsum" id="4V5Y"/>
<dbReference type="PDBsum" id="4V64"/>
<dbReference type="PDBsum" id="4V65"/>
<dbReference type="PDBsum" id="4V66"/>
<dbReference type="PDBsum" id="4V69"/>
<dbReference type="PDBsum" id="4V6C"/>
<dbReference type="PDBsum" id="4V6D"/>
<dbReference type="PDBsum" id="4V6E"/>
<dbReference type="PDBsum" id="4V6K"/>
<dbReference type="PDBsum" id="4V6L"/>
<dbReference type="PDBsum" id="4V6M"/>
<dbReference type="PDBsum" id="4V6N"/>
<dbReference type="PDBsum" id="4V6O"/>
<dbReference type="PDBsum" id="4V6P"/>
<dbReference type="PDBsum" id="4V6Q"/>
<dbReference type="PDBsum" id="4V6R"/>
<dbReference type="PDBsum" id="4V6S"/>
<dbReference type="PDBsum" id="4V6T"/>
<dbReference type="PDBsum" id="4V6V"/>
<dbReference type="PDBsum" id="4V6Y"/>
<dbReference type="PDBsum" id="4V6Z"/>
<dbReference type="PDBsum" id="4V70"/>
<dbReference type="PDBsum" id="4V71"/>
<dbReference type="PDBsum" id="4V72"/>
<dbReference type="PDBsum" id="4V73"/>
<dbReference type="PDBsum" id="4V74"/>
<dbReference type="PDBsum" id="4V75"/>
<dbReference type="PDBsum" id="4V76"/>
<dbReference type="PDBsum" id="4V77"/>
<dbReference type="PDBsum" id="4V78"/>
<dbReference type="PDBsum" id="4V79"/>
<dbReference type="PDBsum" id="4V7A"/>
<dbReference type="PDBsum" id="4V7B"/>
<dbReference type="PDBsum" id="4V7C"/>
<dbReference type="PDBsum" id="4V7D"/>
<dbReference type="PDBsum" id="4V7I"/>
<dbReference type="PDBsum" id="4V7S"/>
<dbReference type="PDBsum" id="4V7T"/>
<dbReference type="PDBsum" id="4V7U"/>
<dbReference type="PDBsum" id="4V7V"/>
<dbReference type="PDBsum" id="4V85"/>
<dbReference type="PDBsum" id="4V89"/>
<dbReference type="PDBsum" id="4V9C"/>
<dbReference type="PDBsum" id="4V9D"/>
<dbReference type="PDBsum" id="4V9O"/>
<dbReference type="PDBsum" id="4V9P"/>
<dbReference type="PDBsum" id="4WF1"/>
<dbReference type="PDBsum" id="4WOI"/>
<dbReference type="PDBsum" id="4WWW"/>
<dbReference type="PDBsum" id="4YBB"/>
<dbReference type="PDBsum" id="5ADY"/>
<dbReference type="PDBsum" id="5AFI"/>
<dbReference type="PDBsum" id="5AKA"/>
<dbReference type="PDBsum" id="5GAD"/>
<dbReference type="PDBsum" id="5GAE"/>
<dbReference type="PDBsum" id="5GAF"/>
<dbReference type="PDBsum" id="5GAG"/>
<dbReference type="PDBsum" id="5GAH"/>
<dbReference type="PDBsum" id="5H5U"/>
<dbReference type="PDBsum" id="5IQR"/>
<dbReference type="PDBsum" id="5IT8"/>
<dbReference type="PDBsum" id="5J5B"/>
<dbReference type="PDBsum" id="5J7L"/>
<dbReference type="PDBsum" id="5J88"/>
<dbReference type="PDBsum" id="5J8A"/>
<dbReference type="PDBsum" id="5J91"/>
<dbReference type="PDBsum" id="5JC9"/>
<dbReference type="PDBsum" id="5JTE"/>
<dbReference type="PDBsum" id="5JU8"/>
<dbReference type="PDBsum" id="5KCR"/>
<dbReference type="PDBsum" id="5KCS"/>
<dbReference type="PDBsum" id="5KPS"/>
<dbReference type="PDBsum" id="5KPV"/>
<dbReference type="PDBsum" id="5KPW"/>
<dbReference type="PDBsum" id="5KPX"/>
<dbReference type="PDBsum" id="5L3P"/>
<dbReference type="PDBsum" id="5LZA"/>
<dbReference type="PDBsum" id="5LZB"/>
<dbReference type="PDBsum" id="5LZC"/>
<dbReference type="PDBsum" id="5LZD"/>
<dbReference type="PDBsum" id="5LZE"/>
<dbReference type="PDBsum" id="5LZF"/>
<dbReference type="PDBsum" id="5MDV"/>
<dbReference type="PDBsum" id="5MDW"/>
<dbReference type="PDBsum" id="5MDY"/>
<dbReference type="PDBsum" id="5MDZ"/>
<dbReference type="PDBsum" id="5MGP"/>
<dbReference type="PDBsum" id="5NCO"/>
<dbReference type="PDBsum" id="5NP6"/>
<dbReference type="PDBsum" id="5NWY"/>
<dbReference type="PDBsum" id="5O2R"/>
<dbReference type="PDBsum" id="5U4I"/>
<dbReference type="PDBsum" id="5U9F"/>
<dbReference type="PDBsum" id="5U9G"/>
<dbReference type="PDBsum" id="5UYK"/>
<dbReference type="PDBsum" id="5UYL"/>
<dbReference type="PDBsum" id="5UYM"/>
<dbReference type="PDBsum" id="5UYN"/>
<dbReference type="PDBsum" id="5UYP"/>
<dbReference type="PDBsum" id="5UYQ"/>
<dbReference type="PDBsum" id="5WDT"/>
<dbReference type="PDBsum" id="5WE4"/>
<dbReference type="PDBsum" id="5WE6"/>
<dbReference type="PDBsum" id="5WF0"/>
<dbReference type="PDBsum" id="5WFK"/>
<dbReference type="PDBsum" id="5WFS"/>
<dbReference type="PDBsum" id="6BU8"/>
<dbReference type="PDBsum" id="6BY1"/>
<dbReference type="PDBsum" id="6C4I"/>
<dbReference type="PDBsum" id="6DNC"/>
<dbReference type="PDBsum" id="6ENF"/>
<dbReference type="PDBsum" id="6ENJ"/>
<dbReference type="PDBsum" id="6ENU"/>
<dbReference type="PDBsum" id="6FU8"/>
<dbReference type="PDBsum" id="6GBZ"/>
<dbReference type="PDBsum" id="6GC0"/>
<dbReference type="PDBsum" id="6GC4"/>
<dbReference type="PDBsum" id="6GC6"/>
<dbReference type="PDBsum" id="6GC7"/>
<dbReference type="PDBsum" id="6GC8"/>
<dbReference type="PDBsum" id="6GWT"/>
<dbReference type="PDBsum" id="6GXM"/>
<dbReference type="PDBsum" id="6GXN"/>
<dbReference type="PDBsum" id="6GXO"/>
<dbReference type="PDBsum" id="6GXP"/>
<dbReference type="PDBsum" id="6H4N"/>
<dbReference type="PDBsum" id="6H58"/>
<dbReference type="PDBsum" id="6HRM"/>
<dbReference type="PDBsum" id="6I0Y"/>
<dbReference type="PDBsum" id="6I7V"/>
<dbReference type="PDBsum" id="6O9J"/>
<dbReference type="PDBsum" id="6O9K"/>
<dbReference type="PDBsum" id="6OFX"/>
<dbReference type="PDBsum" id="6OG7"/>
<dbReference type="PDBsum" id="6OGF"/>
<dbReference type="PDBsum" id="6OGG"/>
<dbReference type="PDBsum" id="6OGI"/>
<dbReference type="PDBsum" id="6OM6"/>
<dbReference type="PDBsum" id="6ORE"/>
<dbReference type="PDBsum" id="6ORL"/>
<dbReference type="PDBsum" id="6OSK"/>
<dbReference type="PDBsum" id="6OSQ"/>
<dbReference type="PDBsum" id="6OST"/>
<dbReference type="PDBsum" id="6OT3"/>
<dbReference type="PDBsum" id="6OUO"/>
<dbReference type="PDBsum" id="6PJ6"/>
<dbReference type="PDBsum" id="6Q97"/>
<dbReference type="PDBsum" id="6Q98"/>
<dbReference type="PDBsum" id="6Q9A"/>
<dbReference type="PDBsum" id="6QUL"/>
<dbReference type="PDBsum" id="6S0K"/>
<dbReference type="PDBsum" id="6SZS"/>
<dbReference type="PDBsum" id="6TBV"/>
<dbReference type="PDBsum" id="6TC3"/>
<dbReference type="PDBsum" id="6U48"/>
<dbReference type="PDBsum" id="6VU3"/>
<dbReference type="PDBsum" id="6VWL"/>
<dbReference type="PDBsum" id="6VWM"/>
<dbReference type="PDBsum" id="6VWN"/>
<dbReference type="PDBsum" id="6VYQ"/>
<dbReference type="PDBsum" id="6VYR"/>
<dbReference type="PDBsum" id="6VYS"/>
<dbReference type="PDBsum" id="6VYT"/>
<dbReference type="PDBsum" id="6VYU"/>
<dbReference type="PDBsum" id="6VYW"/>
<dbReference type="PDBsum" id="6VYX"/>
<dbReference type="PDBsum" id="6VYY"/>
<dbReference type="PDBsum" id="6VYZ"/>
<dbReference type="PDBsum" id="6VZ2"/>
<dbReference type="PDBsum" id="6VZ3"/>
<dbReference type="PDBsum" id="6VZ5"/>
<dbReference type="PDBsum" id="6VZ7"/>
<dbReference type="PDBsum" id="6VZJ"/>
<dbReference type="PDBsum" id="6WD0"/>
<dbReference type="PDBsum" id="6WD1"/>
<dbReference type="PDBsum" id="6WD2"/>
<dbReference type="PDBsum" id="6WD3"/>
<dbReference type="PDBsum" id="6WD4"/>
<dbReference type="PDBsum" id="6WD5"/>
<dbReference type="PDBsum" id="6WD6"/>
<dbReference type="PDBsum" id="6WD7"/>
<dbReference type="PDBsum" id="6WD8"/>
<dbReference type="PDBsum" id="6WD9"/>
<dbReference type="PDBsum" id="6WDA"/>
<dbReference type="PDBsum" id="6WDB"/>
<dbReference type="PDBsum" id="6WDC"/>
<dbReference type="PDBsum" id="6WDD"/>
<dbReference type="PDBsum" id="6WDE"/>
<dbReference type="PDBsum" id="6WDF"/>
<dbReference type="PDBsum" id="6WDG"/>
<dbReference type="PDBsum" id="6WDH"/>
<dbReference type="PDBsum" id="6WDI"/>
<dbReference type="PDBsum" id="6WDJ"/>
<dbReference type="PDBsum" id="6WDK"/>
<dbReference type="PDBsum" id="6WDL"/>
<dbReference type="PDBsum" id="6WDM"/>
<dbReference type="PDBsum" id="6WNT"/>
<dbReference type="PDBsum" id="6WNV"/>
<dbReference type="PDBsum" id="6WNW"/>
<dbReference type="PDBsum" id="6X6T"/>
<dbReference type="PDBsum" id="6X7F"/>
<dbReference type="PDBsum" id="6X7K"/>
<dbReference type="PDBsum" id="6X9Q"/>
<dbReference type="PDBsum" id="6XDQ"/>
<dbReference type="PDBsum" id="6XDR"/>
<dbReference type="PDBsum" id="6XGF"/>
<dbReference type="PDBsum" id="6XII"/>
<dbReference type="PDBsum" id="6XIJ"/>
<dbReference type="PDBsum" id="6XZ7"/>
<dbReference type="PDBsum" id="6XZA"/>
<dbReference type="PDBsum" id="6XZB"/>
<dbReference type="PDBsum" id="6Y69"/>
<dbReference type="PDBsum" id="6YS3"/>
<dbReference type="PDBsum" id="6YSR"/>
<dbReference type="PDBsum" id="6YSS"/>
<dbReference type="PDBsum" id="6YST"/>
<dbReference type="PDBsum" id="6YSU"/>
<dbReference type="PDBsum" id="6ZTJ"/>
<dbReference type="PDBsum" id="6ZTL"/>
<dbReference type="PDBsum" id="6ZTM"/>
<dbReference type="PDBsum" id="6ZTN"/>
<dbReference type="PDBsum" id="6ZTO"/>
<dbReference type="PDBsum" id="6ZTP"/>
<dbReference type="PDBsum" id="6ZU1"/>
<dbReference type="PDBsum" id="7ABZ"/>
<dbReference type="PDBsum" id="7AC7"/>
<dbReference type="PDBsum" id="7ACJ"/>
<dbReference type="PDBsum" id="7ACR"/>
<dbReference type="PDBsum" id="7B5K"/>
<dbReference type="PDBsum" id="7BL2"/>
<dbReference type="PDBsum" id="7BL3"/>
<dbReference type="PDBsum" id="7BL4"/>
<dbReference type="PDBsum" id="7BL5"/>
<dbReference type="PDBsum" id="7BL6"/>
<dbReference type="PDBsum" id="7BV8"/>
<dbReference type="PDBsum" id="7D6Z"/>
<dbReference type="PDBsum" id="7D80"/>
<dbReference type="PDBsum" id="7JSS"/>
<dbReference type="PDBsum" id="7JSW"/>
<dbReference type="PDBsum" id="7JSZ"/>
<dbReference type="PDBsum" id="7JT1"/>
<dbReference type="PDBsum" id="7JT2"/>
<dbReference type="PDBsum" id="7JT3"/>
<dbReference type="PDBsum" id="7K00"/>
<dbReference type="PDBsum" id="7K50"/>
<dbReference type="PDBsum" id="7K51"/>
<dbReference type="PDBsum" id="7K52"/>
<dbReference type="PDBsum" id="7K53"/>
<dbReference type="PDBsum" id="7K54"/>
<dbReference type="PDBsum" id="7K55"/>
<dbReference type="PDBsum" id="7LV0"/>
<dbReference type="PDBsum" id="7LVK"/>
<dbReference type="PDBsum" id="7M5D"/>
<dbReference type="PDBsum" id="7N1P"/>
<dbReference type="PDBsum" id="7N2C"/>
<dbReference type="PDBsum" id="7N2U"/>
<dbReference type="PDBsum" id="7N2V"/>
<dbReference type="PDBsum" id="7N30"/>
<dbReference type="PDBsum" id="7N31"/>
<dbReference type="PDBsum" id="7NBU"/>
<dbReference type="PDBsum" id="7NWT"/>
<dbReference type="PDBsum" id="7O19"/>
<dbReference type="PDBsum" id="7O1A"/>
<dbReference type="PDBsum" id="7O1C"/>
<dbReference type="PDBsum" id="7ODE"/>
<dbReference type="PDBsum" id="7OIZ"/>
<dbReference type="PDBsum" id="7OJ0"/>
<dbReference type="PDBsum" id="7P3K"/>
<dbReference type="PDBsum" id="7PJS"/>
<dbReference type="PDBsum" id="7PJT"/>
<dbReference type="PDBsum" id="7PJU"/>
<dbReference type="PDBsum" id="7PJV"/>
<dbReference type="PDBsum" id="7PJW"/>
<dbReference type="PDBsum" id="7PJX"/>
<dbReference type="PDBsum" id="7PJY"/>
<dbReference type="PDBsum" id="7PJZ"/>
<dbReference type="PDBsum" id="7Q4K"/>
<dbReference type="PDBsum" id="7QG8"/>
<dbReference type="PDBsum" id="7QGH"/>
<dbReference type="PDBsum" id="7QGN"/>
<dbReference type="PDBsum" id="7QGR"/>
<dbReference type="PDBsum" id="7QQ3"/>
<dbReference type="PDBsum" id="7S1G"/>
<dbReference type="PDBsum" id="7S1H"/>
<dbReference type="PDBsum" id="7S1I"/>
<dbReference type="PDBsum" id="7S1J"/>
<dbReference type="PDBsum" id="7S1K"/>
<dbReference type="PDBsum" id="7SA4"/>
<dbReference type="PDBsum" id="7SS9"/>
<dbReference type="PDBsum" id="7SSD"/>
<dbReference type="PDBsum" id="7SSL"/>
<dbReference type="PDBsum" id="7SSN"/>
<dbReference type="PDBsum" id="7SSO"/>
<dbReference type="PDBsum" id="7SSW"/>
<dbReference type="PDBsum" id="7ST2"/>
<dbReference type="PDBsum" id="7ST6"/>
<dbReference type="PDBsum" id="7ST7"/>
<dbReference type="PDBsum" id="7TOS"/>
<dbReference type="PDBsum" id="7UG7"/>
<dbReference type="PDBsum" id="7UPH"/>
<dbReference type="PDBsum" id="7Y7C"/>
<dbReference type="PDBsum" id="7Y7D"/>
<dbReference type="PDBsum" id="7Y7E"/>
<dbReference type="PDBsum" id="7Y7F"/>
<dbReference type="PDBsum" id="7Y7G"/>
<dbReference type="PDBsum" id="7Y7H"/>
<dbReference type="PDBsum" id="7YLA"/>
<dbReference type="PDBsum" id="7ZP8"/>
<dbReference type="PDBsum" id="7ZQ5"/>
<dbReference type="PDBsum" id="7ZQ6"/>
<dbReference type="PDBsum" id="7ZTA"/>
<dbReference type="PDBsum" id="8A3L"/>
<dbReference type="PDBsum" id="8AKN"/>
<dbReference type="PDBsum" id="8AM9"/>
<dbReference type="PDBsum" id="8ANA"/>
<dbReference type="PDBsum" id="8AP4"/>
<dbReference type="PDBsum" id="8AYE"/>
<dbReference type="PDBsum" id="8B0X"/>
<dbReference type="PDBsum" id="8B7Y"/>
<dbReference type="PDBsum" id="8BF7"/>
<dbReference type="PDBsum" id="8BGE"/>
<dbReference type="PDBsum" id="8BGH"/>
<dbReference type="PDBsum" id="8BH4"/>
<dbReference type="PDBsum" id="8BHJ"/>
<dbReference type="PDBsum" id="8BHL"/>
<dbReference type="PDBsum" id="8BHN"/>
<dbReference type="PDBsum" id="8BHP"/>
<dbReference type="PDBsum" id="8BIL"/>
<dbReference type="PDBsum" id="8BIM"/>
<dbReference type="PDBsum" id="8C8X"/>
<dbReference type="PDBsum" id="8C8Y"/>
<dbReference type="PDBsum" id="8C8Z"/>
<dbReference type="PDBsum" id="8C90"/>
<dbReference type="PDBsum" id="8C91"/>
<dbReference type="PDBsum" id="8C92"/>
<dbReference type="PDBsum" id="8C93"/>
<dbReference type="PDBsum" id="8C97"/>
<dbReference type="PDBsum" id="8C98"/>
<dbReference type="PDBsum" id="8C9A"/>
<dbReference type="PDBsum" id="8CAM"/>
<dbReference type="PDBsum" id="8CEU"/>
<dbReference type="PDBsum" id="8CGD"/>
<dbReference type="PDBsum" id="8CGK"/>
<dbReference type="PDBsum" id="8CGV"/>
<dbReference type="PDBsum" id="8EIU"/>
<dbReference type="PDBsum" id="8EKC"/>
<dbReference type="PDBsum" id="8EMM"/>
<dbReference type="PDBsum" id="8FIZ"/>
<dbReference type="PDBsum" id="8FTO"/>
<dbReference type="PDBsum" id="8FZD"/>
<dbReference type="PDBsum" id="8FZE"/>
<dbReference type="PDBsum" id="8FZF"/>
<dbReference type="PDBsum" id="8FZG"/>
<dbReference type="PDBsum" id="8FZH"/>
<dbReference type="PDBsum" id="8FZI"/>
<dbReference type="PDBsum" id="8FZJ"/>
<dbReference type="PDBsum" id="8G2U"/>
<dbReference type="PDBsum" id="8G31"/>
<dbReference type="PDBsum" id="8G34"/>
<dbReference type="PDBsum" id="8G38"/>
<dbReference type="PDBsum" id="8G6W"/>
<dbReference type="PDBsum" id="8G6X"/>
<dbReference type="PDBsum" id="8G6Y"/>
<dbReference type="PDBsum" id="8G7P"/>
<dbReference type="PDBsum" id="8G7Q"/>
<dbReference type="PDBsum" id="8G7R"/>
<dbReference type="PDBsum" id="8G7S"/>
<dbReference type="PDBsum" id="8HSP"/>
<dbReference type="PDBsum" id="8HTZ"/>
<dbReference type="PDBsum" id="8HU1"/>
<dbReference type="PDBsum" id="8IFB"/>
<dbReference type="PDBsum" id="8IFC"/>
<dbReference type="PDBsum" id="8J1Z"/>
<dbReference type="PDBsum" id="8P16"/>
<dbReference type="PDBsum" id="8P17"/>
<dbReference type="PDBsum" id="8P18"/>
<dbReference type="PDBsum" id="8PEG"/>
<dbReference type="PDBsum" id="8PHJ"/>
<dbReference type="PDBsum" id="8PKL"/>
<dbReference type="PDBsum" id="8PVA"/>
<dbReference type="PDBsum" id="8Q4F"/>
<dbReference type="PDBsum" id="8QBT"/>
<dbReference type="PDBsum" id="8QK7"/>
<dbReference type="PDBsum" id="8QOA"/>
<dbReference type="PDBsum" id="8R6C"/>
<dbReference type="PDBsum" id="8R8M"/>
<dbReference type="PDBsum" id="8RPY"/>
<dbReference type="PDBsum" id="8RPZ"/>
<dbReference type="PDBsum" id="8RQ0"/>
<dbReference type="PDBsum" id="8RQ2"/>
<dbReference type="PDBsum" id="8SYL"/>
<dbReference type="PDBsum" id="8T5D"/>
<dbReference type="PDBsum" id="8T5H"/>
<dbReference type="PDBsum" id="8UPO"/>
<dbReference type="PDBsum" id="8UPR"/>
<dbReference type="PDBsum" id="8UQL"/>
<dbReference type="PDBsum" id="8UQM"/>
<dbReference type="PDBsum" id="8UQP"/>
<dbReference type="PDBsum" id="8UR0"/>
<dbReference type="PDBsum" id="8URH"/>
<dbReference type="PDBsum" id="8URI"/>
<dbReference type="PDBsum" id="8URX"/>
<dbReference type="PDBsum" id="8URY"/>
<dbReference type="PDBsum" id="8VS9"/>
<dbReference type="PDBsum" id="8VSA"/>
<dbReference type="PDBsum" id="8W51"/>
<dbReference type="PDBsum" id="8YUO"/>
<dbReference type="PDBsum" id="8YUP"/>
<dbReference type="PDBsum" id="8YUQ"/>
<dbReference type="PDBsum" id="8YUR"/>
<dbReference type="PDBsum" id="8YUS"/>
<dbReference type="PDBsum" id="9CL9"/>
<dbReference type="PDBsum" id="9D89"/>
<dbReference type="PDBsum" id="9DYG"/>
<dbReference type="PDBsum" id="9FBV"/>
<dbReference type="PDBsum" id="9GFT"/>
<dbReference type="PDBsum" id="9GGR"/>
<dbReference type="PDBsum" id="9H3M"/>
<dbReference type="PDBsum" id="9H3N"/>
<dbReference type="PDBsum" id="9H3O"/>
<dbReference type="PDBsum" id="9H3P"/>
<dbReference type="PDBsum" id="9H3Q"/>
<dbReference type="PDBsum" id="9H3R"/>
<dbReference type="PDBsum" id="9H3S"/>
<dbReference type="PDBsum" id="9H3T"/>
<dbReference type="PDBsum" id="9H3U"/>
<dbReference type="PDBsum" id="9H3V"/>
<dbReference type="PDBsum" id="9H3W"/>
<dbReference type="PDBsum" id="9H3X"/>
<dbReference type="PDBsum" id="9H3Y"/>
<dbReference type="PDBsum" id="9H3Z"/>
<dbReference type="PDBsum" id="9HA1"/>
<dbReference type="PDBsum" id="9HA2"/>
<dbReference type="PDBsum" id="9HA3"/>
<dbReference type="PDBsum" id="9HA4"/>
<dbReference type="PDBsum" id="9HA5"/>
<dbReference type="PDBsum" id="9HA6"/>
<dbReference type="PDBsum" id="9HA7"/>
<dbReference type="PDBsum" id="9HAI"/>
<dbReference type="PDBsum" id="9MOR"/>
<dbReference type="PDBsum" id="9MQ4"/>
<dbReference type="EMDB" id="EMD-0076"/>
<dbReference type="EMDB" id="EMD-0080"/>
<dbReference type="EMDB" id="EMD-0081"/>
<dbReference type="EMDB" id="EMD-0082"/>
<dbReference type="EMDB" id="EMD-0083"/>
<dbReference type="EMDB" id="EMD-0137"/>
<dbReference type="EMDB" id="EMD-0139"/>
<dbReference type="EMDB" id="EMD-0261"/>
<dbReference type="EMDB" id="EMD-0322"/>
<dbReference type="EMDB" id="EMD-10073"/>
<dbReference type="EMDB" id="EMD-10353"/>
<dbReference type="EMDB" id="EMD-10453"/>
<dbReference type="EMDB" id="EMD-10458"/>
<dbReference type="EMDB" id="EMD-10655"/>
<dbReference type="EMDB" id="EMD-10656"/>
<dbReference type="EMDB" id="EMD-10657"/>
<dbReference type="EMDB" id="EMD-10705"/>
<dbReference type="EMDB" id="EMD-10905"/>
<dbReference type="EMDB" id="EMD-10906"/>
<dbReference type="EMDB" id="EMD-10907"/>
<dbReference type="EMDB" id="EMD-10908"/>
<dbReference type="EMDB" id="EMD-11418"/>
<dbReference type="EMDB" id="EMD-11419"/>
<dbReference type="EMDB" id="EMD-11420"/>
<dbReference type="EMDB" id="EMD-11421"/>
<dbReference type="EMDB" id="EMD-11422"/>
<dbReference type="EMDB" id="EMD-11423"/>
<dbReference type="EMDB" id="EMD-11426"/>
<dbReference type="EMDB" id="EMD-11710"/>
<dbReference type="EMDB" id="EMD-11713"/>
<dbReference type="EMDB" id="EMD-11717"/>
<dbReference type="EMDB" id="EMD-11718"/>
<dbReference type="EMDB" id="EMD-12035"/>
<dbReference type="EMDB" id="EMD-12215"/>
<dbReference type="EMDB" id="EMD-12216"/>
<dbReference type="EMDB" id="EMD-12217"/>
<dbReference type="EMDB" id="EMD-12218"/>
<dbReference type="EMDB" id="EMD-12219"/>
<dbReference type="EMDB" id="EMD-12261"/>
<dbReference type="EMDB" id="EMD-12635"/>
<dbReference type="EMDB" id="EMD-12693"/>
<dbReference type="EMDB" id="EMD-12694"/>
<dbReference type="EMDB" id="EMD-12695"/>
<dbReference type="EMDB" id="EMD-12826"/>
<dbReference type="EMDB" id="EMD-12936"/>
<dbReference type="EMDB" id="EMD-12937"/>
<dbReference type="EMDB" id="EMD-13180"/>
<dbReference type="EMDB" id="EMD-13458"/>
<dbReference type="EMDB" id="EMD-13459"/>
<dbReference type="EMDB" id="EMD-13461"/>
<dbReference type="EMDB" id="EMD-13462"/>
<dbReference type="EMDB" id="EMD-13463"/>
<dbReference type="EMDB" id="EMD-13464"/>
<dbReference type="EMDB" id="EMD-13465"/>
<dbReference type="EMDB" id="EMD-13805"/>
<dbReference type="EMDB" id="EMD-13952"/>
<dbReference type="EMDB" id="EMD-13955"/>
<dbReference type="EMDB" id="EMD-14121"/>
<dbReference type="EMDB" id="EMD-14454"/>
<dbReference type="EMDB" id="EMD-14846"/>
<dbReference type="EMDB" id="EMD-14850"/>
<dbReference type="EMDB" id="EMD-14864"/>
<dbReference type="EMDB" id="EMD-14865"/>
<dbReference type="EMDB" id="EMD-14956"/>
<dbReference type="EMDB" id="EMD-15116"/>
<dbReference type="EMDB" id="EMD-15558"/>
<dbReference type="EMDB" id="EMD-15712"/>
<dbReference type="EMDB" id="EMD-15793"/>
<dbReference type="EMDB" id="EMD-15905"/>
<dbReference type="EMDB" id="EMD-16015"/>
<dbReference type="EMDB" id="EMD-16029"/>
<dbReference type="EMDB" id="EMD-16031"/>
<dbReference type="EMDB" id="EMD-16047"/>
<dbReference type="EMDB" id="EMD-16057"/>
<dbReference type="EMDB" id="EMD-16059"/>
<dbReference type="EMDB" id="EMD-16062"/>
<dbReference type="EMDB" id="EMD-16065"/>
<dbReference type="EMDB" id="EMD-16081"/>
<dbReference type="EMDB" id="EMD-16082"/>
<dbReference type="EMDB" id="EMD-16494"/>
<dbReference type="EMDB" id="EMD-16495"/>
<dbReference type="EMDB" id="EMD-16496"/>
<dbReference type="EMDB" id="EMD-16497"/>
<dbReference type="EMDB" id="EMD-16498"/>
<dbReference type="EMDB" id="EMD-16499"/>
<dbReference type="EMDB" id="EMD-16500"/>
<dbReference type="EMDB" id="EMD-16504"/>
<dbReference type="EMDB" id="EMD-16505"/>
<dbReference type="EMDB" id="EMD-16507"/>
<dbReference type="EMDB" id="EMD-16530"/>
<dbReference type="EMDB" id="EMD-16613"/>
<dbReference type="EMDB" id="EMD-16641"/>
<dbReference type="EMDB" id="EMD-16646"/>
<dbReference type="EMDB" id="EMD-16652"/>
<dbReference type="EMDB" id="EMD-17346"/>
<dbReference type="EMDB" id="EMD-17347"/>
<dbReference type="EMDB" id="EMD-17348"/>
<dbReference type="EMDB" id="EMD-17631"/>
<dbReference type="EMDB" id="EMD-17667"/>
<dbReference type="EMDB" id="EMD-17743"/>
<dbReference type="EMDB" id="EMD-17959"/>
<dbReference type="EMDB" id="EMD-18145"/>
<dbReference type="EMDB" id="EMD-18320"/>
<dbReference type="EMDB" id="EMD-18458"/>
<dbReference type="EMDB" id="EMD-18534"/>
<dbReference type="EMDB" id="EMD-18950"/>
<dbReference type="EMDB" id="EMD-19004"/>
<dbReference type="EMDB" id="EMD-19426"/>
<dbReference type="EMDB" id="EMD-19427"/>
<dbReference type="EMDB" id="EMD-19428"/>
<dbReference type="EMDB" id="EMD-19429"/>
<dbReference type="EMDB" id="EMD-20048"/>
<dbReference type="EMDB" id="EMD-20052"/>
<dbReference type="EMDB" id="EMD-21420"/>
<dbReference type="EMDB" id="EMD-21421"/>
<dbReference type="EMDB" id="EMD-21422"/>
<dbReference type="EMDB" id="EMD-21620"/>
<dbReference type="EMDB" id="EMD-21625"/>
<dbReference type="EMDB" id="EMD-21630"/>
<dbReference type="EMDB" id="EMD-21631"/>
<dbReference type="EMDB" id="EMD-21632"/>
<dbReference type="EMDB" id="EMD-21633"/>
<dbReference type="EMDB" id="EMD-21634"/>
<dbReference type="EMDB" id="EMD-21635"/>
<dbReference type="EMDB" id="EMD-21636"/>
<dbReference type="EMDB" id="EMD-21637"/>
<dbReference type="EMDB" id="EMD-21638"/>
<dbReference type="EMDB" id="EMD-21639"/>
<dbReference type="EMDB" id="EMD-21640"/>
<dbReference type="EMDB" id="EMD-21641"/>
<dbReference type="EMDB" id="EMD-21856"/>
<dbReference type="EMDB" id="EMD-21857"/>
<dbReference type="EMDB" id="EMD-21858"/>
<dbReference type="EMDB" id="EMD-22459"/>
<dbReference type="EMDB" id="EMD-22461"/>
<dbReference type="EMDB" id="EMD-22464"/>
<dbReference type="EMDB" id="EMD-22466"/>
<dbReference type="EMDB" id="EMD-22469"/>
<dbReference type="EMDB" id="EMD-22472"/>
<dbReference type="EMDB" id="EMD-22669"/>
<dbReference type="EMDB" id="EMD-22670"/>
<dbReference type="EMDB" id="EMD-22671"/>
<dbReference type="EMDB" id="EMD-22672"/>
<dbReference type="EMDB" id="EMD-22673"/>
<dbReference type="EMDB" id="EMD-22674"/>
<dbReference type="EMDB" id="EMD-23528"/>
<dbReference type="EMDB" id="EMD-24120"/>
<dbReference type="EMDB" id="EMD-24132"/>
<dbReference type="EMDB" id="EMD-24133"/>
<dbReference type="EMDB" id="EMD-24134"/>
<dbReference type="EMDB" id="EMD-24135"/>
<dbReference type="EMDB" id="EMD-24136"/>
<dbReference type="EMDB" id="EMD-24803"/>
<dbReference type="EMDB" id="EMD-25405"/>
<dbReference type="EMDB" id="EMD-25407"/>
<dbReference type="EMDB" id="EMD-25409"/>
<dbReference type="EMDB" id="EMD-25410"/>
<dbReference type="EMDB" id="EMD-25411"/>
<dbReference type="EMDB" id="EMD-25415"/>
<dbReference type="EMDB" id="EMD-25418"/>
<dbReference type="EMDB" id="EMD-25420"/>
<dbReference type="EMDB" id="EMD-25421"/>
<dbReference type="EMDB" id="EMD-30215"/>
<dbReference type="EMDB" id="EMD-30598"/>
<dbReference type="EMDB" id="EMD-30611"/>
<dbReference type="EMDB" id="EMD-33660"/>
<dbReference type="EMDB" id="EMD-33661"/>
<dbReference type="EMDB" id="EMD-33662"/>
<dbReference type="EMDB" id="EMD-33663"/>
<dbReference type="EMDB" id="EMD-33664"/>
<dbReference type="EMDB" id="EMD-33665"/>
<dbReference type="EMDB" id="EMD-33904"/>
<dbReference type="EMDB" id="EMD-3489"/>
<dbReference type="EMDB" id="EMD-3490"/>
<dbReference type="EMDB" id="EMD-3492"/>
<dbReference type="EMDB" id="EMD-3493"/>
<dbReference type="EMDB" id="EMD-35001"/>
<dbReference type="EMDB" id="EMD-35020"/>
<dbReference type="EMDB" id="EMD-35022"/>
<dbReference type="EMDB" id="EMD-3508"/>
<dbReference type="EMDB" id="EMD-35411"/>
<dbReference type="EMDB" id="EMD-35412"/>
<dbReference type="EMDB" id="EMD-35939"/>
<dbReference type="EMDB" id="EMD-3617"/>
<dbReference type="EMDB" id="EMD-3713"/>
<dbReference type="EMDB" id="EMD-37271"/>
<dbReference type="EMDB" id="EMD-3730"/>
<dbReference type="EMDB" id="EMD-3898"/>
<dbReference type="EMDB" id="EMD-3899"/>
<dbReference type="EMDB" id="EMD-3903"/>
<dbReference type="EMDB" id="EMD-39577"/>
<dbReference type="EMDB" id="EMD-39578"/>
<dbReference type="EMDB" id="EMD-39579"/>
<dbReference type="EMDB" id="EMD-39580"/>
<dbReference type="EMDB" id="EMD-39581"/>
<dbReference type="EMDB" id="EMD-4001"/>
<dbReference type="EMDB" id="EMD-4121"/>
<dbReference type="EMDB" id="EMD-4122"/>
<dbReference type="EMDB" id="EMD-4123"/>
<dbReference type="EMDB" id="EMD-4124"/>
<dbReference type="EMDB" id="EMD-4125"/>
<dbReference type="EMDB" id="EMD-4126"/>
<dbReference type="EMDB" id="EMD-4378"/>
<dbReference type="EMDB" id="EMD-4379"/>
<dbReference type="EMDB" id="EMD-4380"/>
<dbReference type="EMDB" id="EMD-4381"/>
<dbReference type="EMDB" id="EMD-4382"/>
<dbReference type="EMDB" id="EMD-4383"/>
<dbReference type="EMDB" id="EMD-4476"/>
<dbReference type="EMDB" id="EMD-4477"/>
<dbReference type="EMDB" id="EMD-4478"/>
<dbReference type="EMDB" id="EMD-45666"/>
<dbReference type="EMDB" id="EMD-4638"/>
<dbReference type="EMDB" id="EMD-47303"/>
<dbReference type="EMDB" id="EMD-50296"/>
<dbReference type="EMDB" id="EMD-51318"/>
<dbReference type="EMDB" id="EMD-51340"/>
<dbReference type="EMDB" id="EMD-51830"/>
<dbReference type="EMDB" id="EMD-51831"/>
<dbReference type="EMDB" id="EMD-51832"/>
<dbReference type="EMDB" id="EMD-51833"/>
<dbReference type="EMDB" id="EMD-51834"/>
<dbReference type="EMDB" id="EMD-51835"/>
<dbReference type="EMDB" id="EMD-51836"/>
<dbReference type="EMDB" id="EMD-51837"/>
<dbReference type="EMDB" id="EMD-51838"/>
<dbReference type="EMDB" id="EMD-51839"/>
<dbReference type="EMDB" id="EMD-51840"/>
<dbReference type="EMDB" id="EMD-51841"/>
<dbReference type="EMDB" id="EMD-51842"/>
<dbReference type="EMDB" id="EMD-51843"/>
<dbReference type="EMDB" id="EMD-51973"/>
<dbReference type="EMDB" id="EMD-51974"/>
<dbReference type="EMDB" id="EMD-51975"/>
<dbReference type="EMDB" id="EMD-51976"/>
<dbReference type="EMDB" id="EMD-51977"/>
<dbReference type="EMDB" id="EMD-51978"/>
<dbReference type="EMDB" id="EMD-51979"/>
<dbReference type="EMDB" id="EMD-51981"/>
<dbReference type="EMDB" id="EMD-6667"/>
<dbReference type="EMDB" id="EMD-7289"/>
<dbReference type="EMDB" id="EMD-7341"/>
<dbReference type="EMDB" id="EMD-8000"/>
<dbReference type="EMDB" id="EMD-8001"/>
<dbReference type="EMDB" id="EMD-8002"/>
<dbReference type="EMDB" id="EMD-8003"/>
<dbReference type="EMDB" id="EMD-8004"/>
<dbReference type="EMDB" id="EMD-8107"/>
<dbReference type="EMDB" id="EMD-8175"/>
<dbReference type="EMDB" id="EMD-8176"/>
<dbReference type="EMDB" id="EMD-8237"/>
<dbReference type="EMDB" id="EMD-8238"/>
<dbReference type="EMDB" id="EMD-8279"/>
<dbReference type="EMDB" id="EMD-8280"/>
<dbReference type="EMDB" id="EMD-8281"/>
<dbReference type="EMDB" id="EMD-8282"/>
<dbReference type="EMDB" id="EMD-8505"/>
<dbReference type="EMDB" id="EMD-8615"/>
<dbReference type="EMDB" id="EMD-8616"/>
<dbReference type="EMDB" id="EMD-8617"/>
<dbReference type="EMDB" id="EMD-8618"/>
<dbReference type="EMDB" id="EMD-8619"/>
<dbReference type="EMDB" id="EMD-8620"/>
<dbReference type="EMDB" id="EMD-8813"/>
<dbReference type="EMDB" id="EMD-8814"/>
<dbReference type="EMDB" id="EMD-8815"/>
<dbReference type="EMDB" id="EMD-8828"/>
<dbReference type="SMR" id="P0ADZ0"/>
<dbReference type="BioGRID" id="4261290">
    <property type="interactions" value="364"/>
</dbReference>
<dbReference type="BioGRID" id="852131">
    <property type="interactions" value="4"/>
</dbReference>
<dbReference type="ComplexPortal" id="CPX-3807">
    <property type="entry name" value="50S large ribosomal subunit"/>
</dbReference>
<dbReference type="DIP" id="DIP-35972N"/>
<dbReference type="FunCoup" id="P0ADZ0">
    <property type="interactions" value="817"/>
</dbReference>
<dbReference type="IntAct" id="P0ADZ0">
    <property type="interactions" value="91"/>
</dbReference>
<dbReference type="STRING" id="511145.b3318"/>
<dbReference type="jPOST" id="P0ADZ0"/>
<dbReference type="PaxDb" id="511145-b3318"/>
<dbReference type="EnsemblBacteria" id="AAC76343">
    <property type="protein sequence ID" value="AAC76343"/>
    <property type="gene ID" value="b3318"/>
</dbReference>
<dbReference type="GeneID" id="93778669"/>
<dbReference type="GeneID" id="947819"/>
<dbReference type="KEGG" id="ecj:JW3280"/>
<dbReference type="KEGG" id="eco:b3318"/>
<dbReference type="KEGG" id="ecoc:C3026_18030"/>
<dbReference type="PATRIC" id="fig|1411691.4.peg.3413"/>
<dbReference type="EchoBASE" id="EB0876"/>
<dbReference type="eggNOG" id="COG0089">
    <property type="taxonomic scope" value="Bacteria"/>
</dbReference>
<dbReference type="HOGENOM" id="CLU_037562_3_1_6"/>
<dbReference type="InParanoid" id="P0ADZ0"/>
<dbReference type="OMA" id="DHRAAKP"/>
<dbReference type="OrthoDB" id="9793353at2"/>
<dbReference type="PhylomeDB" id="P0ADZ0"/>
<dbReference type="BioCyc" id="EcoCyc:EG10883-MONOMER"/>
<dbReference type="BioCyc" id="MetaCyc:EG10883-MONOMER"/>
<dbReference type="EvolutionaryTrace" id="P0ADZ0"/>
<dbReference type="PRO" id="PR:P0ADZ0"/>
<dbReference type="Proteomes" id="UP000000625">
    <property type="component" value="Chromosome"/>
</dbReference>
<dbReference type="GO" id="GO:0005737">
    <property type="term" value="C:cytoplasm"/>
    <property type="evidence" value="ECO:0000314"/>
    <property type="project" value="ComplexPortal"/>
</dbReference>
<dbReference type="GO" id="GO:0022625">
    <property type="term" value="C:cytosolic large ribosomal subunit"/>
    <property type="evidence" value="ECO:0000314"/>
    <property type="project" value="CAFA"/>
</dbReference>
<dbReference type="GO" id="GO:0019843">
    <property type="term" value="F:rRNA binding"/>
    <property type="evidence" value="ECO:0007669"/>
    <property type="project" value="UniProtKB-UniRule"/>
</dbReference>
<dbReference type="GO" id="GO:0003735">
    <property type="term" value="F:structural constituent of ribosome"/>
    <property type="evidence" value="ECO:0000314"/>
    <property type="project" value="CAFA"/>
</dbReference>
<dbReference type="GO" id="GO:0002181">
    <property type="term" value="P:cytoplasmic translation"/>
    <property type="evidence" value="ECO:0000303"/>
    <property type="project" value="ComplexPortal"/>
</dbReference>
<dbReference type="GO" id="GO:0000027">
    <property type="term" value="P:ribosomal large subunit assembly"/>
    <property type="evidence" value="ECO:0000314"/>
    <property type="project" value="CAFA"/>
</dbReference>
<dbReference type="FunFam" id="3.30.70.330:FF:000001">
    <property type="entry name" value="50S ribosomal protein L23"/>
    <property type="match status" value="1"/>
</dbReference>
<dbReference type="Gene3D" id="3.30.70.330">
    <property type="match status" value="1"/>
</dbReference>
<dbReference type="HAMAP" id="MF_01369_B">
    <property type="entry name" value="Ribosomal_uL23_B"/>
    <property type="match status" value="1"/>
</dbReference>
<dbReference type="InterPro" id="IPR012677">
    <property type="entry name" value="Nucleotide-bd_a/b_plait_sf"/>
</dbReference>
<dbReference type="InterPro" id="IPR013025">
    <property type="entry name" value="Ribosomal_uL23-like"/>
</dbReference>
<dbReference type="InterPro" id="IPR012678">
    <property type="entry name" value="Ribosomal_uL23/eL15/eS24_sf"/>
</dbReference>
<dbReference type="InterPro" id="IPR001014">
    <property type="entry name" value="Ribosomal_uL23_CS"/>
</dbReference>
<dbReference type="NCBIfam" id="NF004358">
    <property type="entry name" value="PRK05738.1-1"/>
    <property type="match status" value="1"/>
</dbReference>
<dbReference type="NCBIfam" id="NF004359">
    <property type="entry name" value="PRK05738.1-3"/>
    <property type="match status" value="1"/>
</dbReference>
<dbReference type="NCBIfam" id="NF004363">
    <property type="entry name" value="PRK05738.2-4"/>
    <property type="match status" value="1"/>
</dbReference>
<dbReference type="PANTHER" id="PTHR11620">
    <property type="entry name" value="60S RIBOSOMAL PROTEIN L23A"/>
    <property type="match status" value="1"/>
</dbReference>
<dbReference type="Pfam" id="PF00276">
    <property type="entry name" value="Ribosomal_L23"/>
    <property type="match status" value="1"/>
</dbReference>
<dbReference type="SUPFAM" id="SSF54189">
    <property type="entry name" value="Ribosomal proteins S24e, L23 and L15e"/>
    <property type="match status" value="1"/>
</dbReference>
<dbReference type="PROSITE" id="PS00050">
    <property type="entry name" value="RIBOSOMAL_L23"/>
    <property type="match status" value="1"/>
</dbReference>
<name>RL23_ECOLI</name>
<reference key="1">
    <citation type="journal article" date="1979" name="FEBS Lett.">
        <title>Primary structure of protein L23 from the Escherichia coli ribosome.</title>
        <authorList>
            <person name="Wittmann-Liebold B."/>
            <person name="Greuer B."/>
        </authorList>
    </citation>
    <scope>PROTEIN SEQUENCE</scope>
    <scope>SUBUNIT</scope>
    <source>
        <strain>K12</strain>
    </source>
</reference>
<reference key="2">
    <citation type="journal article" date="1985" name="Nucleic Acids Res.">
        <title>Structure of the Escherichia coli S10 ribosomal protein operon.</title>
        <authorList>
            <person name="Zurawski G."/>
            <person name="Zurawski S.M."/>
        </authorList>
    </citation>
    <scope>NUCLEOTIDE SEQUENCE [GENOMIC DNA]</scope>
</reference>
<reference key="3">
    <citation type="journal article" date="1997" name="Science">
        <title>The complete genome sequence of Escherichia coli K-12.</title>
        <authorList>
            <person name="Blattner F.R."/>
            <person name="Plunkett G. III"/>
            <person name="Bloch C.A."/>
            <person name="Perna N.T."/>
            <person name="Burland V."/>
            <person name="Riley M."/>
            <person name="Collado-Vides J."/>
            <person name="Glasner J.D."/>
            <person name="Rode C.K."/>
            <person name="Mayhew G.F."/>
            <person name="Gregor J."/>
            <person name="Davis N.W."/>
            <person name="Kirkpatrick H.A."/>
            <person name="Goeden M.A."/>
            <person name="Rose D.J."/>
            <person name="Mau B."/>
            <person name="Shao Y."/>
        </authorList>
    </citation>
    <scope>NUCLEOTIDE SEQUENCE [LARGE SCALE GENOMIC DNA]</scope>
    <source>
        <strain>K12 / MG1655 / ATCC 47076</strain>
    </source>
</reference>
<reference key="4">
    <citation type="journal article" date="2006" name="Mol. Syst. Biol.">
        <title>Highly accurate genome sequences of Escherichia coli K-12 strains MG1655 and W3110.</title>
        <authorList>
            <person name="Hayashi K."/>
            <person name="Morooka N."/>
            <person name="Yamamoto Y."/>
            <person name="Fujita K."/>
            <person name="Isono K."/>
            <person name="Choi S."/>
            <person name="Ohtsubo E."/>
            <person name="Baba T."/>
            <person name="Wanner B.L."/>
            <person name="Mori H."/>
            <person name="Horiuchi T."/>
        </authorList>
    </citation>
    <scope>NUCLEOTIDE SEQUENCE [LARGE SCALE GENOMIC DNA]</scope>
    <source>
        <strain>K12 / W3110 / ATCC 27325 / DSM 5911</strain>
    </source>
</reference>
<reference key="5">
    <citation type="journal article" date="1981" name="Nucleic Acids Res.">
        <title>The use of 2-iminothiolane as an RNA-protein cross-linking agent in Escherichia coli ribosomes, and the localisation on 23S RNA of sites cross-linked to proteins L4, L6, L21, L23, L27 and L29.</title>
        <authorList>
            <person name="Wower I."/>
            <person name="Wower J."/>
            <person name="Meinke M."/>
            <person name="Brimacombe R."/>
        </authorList>
    </citation>
    <scope>CROSS-LINKING TO 23S RRNA</scope>
    <source>
        <strain>MRE-600</strain>
    </source>
</reference>
<reference key="6">
    <citation type="journal article" date="1987" name="J. Biol. Chem.">
        <title>Incorporation of six additional proteins to complete the assembly map of the 50 S subunit from Escherichia coli ribosomes.</title>
        <authorList>
            <person name="Herold M."/>
            <person name="Nierhaus K.H."/>
        </authorList>
    </citation>
    <scope>ASSEMBLY MAP OF THE 50S SUBUNIT</scope>
    <source>
        <strain>K12</strain>
    </source>
</reference>
<reference key="7">
    <citation type="journal article" date="1989" name="Biochemistry">
        <title>Comparative cross-linking study on the 50S ribosomal subunit from Escherichia coli.</title>
        <authorList>
            <person name="Walleczek J."/>
            <person name="Martin T."/>
            <person name="Redl B."/>
            <person name="Stoeffler-Meilicke M."/>
            <person name="Stoeffler G."/>
        </authorList>
    </citation>
    <scope>CROSS-LINKING TO L29</scope>
</reference>
<reference key="8">
    <citation type="journal article" date="1997" name="Electrophoresis">
        <title>Escherichia coli proteome analysis using the gene-protein database.</title>
        <authorList>
            <person name="VanBogelen R.A."/>
            <person name="Abshire K.Z."/>
            <person name="Moldover B."/>
            <person name="Olson E.R."/>
            <person name="Neidhardt F.C."/>
        </authorList>
    </citation>
    <scope>IDENTIFICATION BY 2D-GEL</scope>
</reference>
<reference key="9">
    <citation type="journal article" date="2002" name="Nature">
        <title>L23 protein functions as a chaperone docking site on the ribosome.</title>
        <authorList>
            <person name="Kramer G."/>
            <person name="Rauch T."/>
            <person name="Rist W."/>
            <person name="Vorderwuelbecke S."/>
            <person name="Patzelt H."/>
            <person name="Schulze-Specking A."/>
            <person name="Ban N."/>
            <person name="Deuerling E."/>
            <person name="Bukau B."/>
        </authorList>
    </citation>
    <scope>BINDING TO TRIGGER FACTOR</scope>
    <scope>MUTAGENESIS OF 16-VAL--GLU-18; GLU-18; 51-PHE--VAL-53 AND GLU-52</scope>
    <source>
        <strain>K12 / MC4100 / ATCC 35695 / DSM 6574</strain>
    </source>
</reference>
<reference key="10">
    <citation type="journal article" date="2003" name="J. Cell Biol.">
        <title>Interplay of signal recognition particle and trigger factor at L23 near the nascent chain exit site on the Escherichia coli ribosome.</title>
        <authorList>
            <person name="Ullers R.S."/>
            <person name="Houben E.N.G."/>
            <person name="Raine A."/>
            <person name="ten Hagen-Jongman C.M."/>
            <person name="Ehrenberg M."/>
            <person name="Brunner J."/>
            <person name="Oudega B."/>
            <person name="Harms N."/>
            <person name="Luirink J."/>
        </authorList>
    </citation>
    <scope>CROSS-LINKS TO FFH (SRP54); TRIGGER FACTOR AND TO NASCENT PROTEIN CHAINS</scope>
    <source>
        <strain>K12 / MC4100 / ATCC 35695 / DSM 6574</strain>
    </source>
</reference>
<reference key="11">
    <citation type="journal article" date="2003" name="RNA">
        <title>The signal recognition particle binds to protein L23 at the peptide exit of the Escherichia coli ribosome.</title>
        <authorList>
            <person name="Gu S.-Q."/>
            <person name="Peske F."/>
            <person name="Wieden H.-J."/>
            <person name="Rodnina M.V."/>
            <person name="Wintermeyer W."/>
        </authorList>
    </citation>
    <scope>IDENTIFICATION OF RIBOSOMAL PROTEIN L23 AS THE DOCKING SITE FOR SIGNAL RECOGNITION PARTICLE</scope>
    <source>
        <strain>MRE-600</strain>
    </source>
</reference>
<reference key="12">
    <citation type="journal article" date="1999" name="Anal. Biochem.">
        <title>Observation of Escherichia coli ribosomal proteins and their posttranslational modifications by mass spectrometry.</title>
        <authorList>
            <person name="Arnold R.J."/>
            <person name="Reilly J.P."/>
        </authorList>
    </citation>
    <scope>MASS SPECTROMETRY</scope>
    <scope>SUBUNIT</scope>
    <source>
        <strain>K12 / ATCC 25404 / DSM 5698 / NCIMB 11290</strain>
    </source>
</reference>
<reference key="13">
    <citation type="journal article" date="2005" name="Nature">
        <title>Structure of the E. coli protein-conducting channel bound to a translating ribosome.</title>
        <authorList>
            <person name="Mitra K."/>
            <person name="Schaffitzel C."/>
            <person name="Shaikh T."/>
            <person name="Tama F."/>
            <person name="Jenni S."/>
            <person name="Brooks C.L. III"/>
            <person name="Ban N."/>
            <person name="Frank J."/>
        </authorList>
    </citation>
    <scope>POSSIBLE CONTACT WITH THE SECYEG TRANSLOCATION COMPLEX</scope>
    <source>
        <strain>MRE-600</strain>
    </source>
</reference>
<reference key="14">
    <citation type="journal article" date="2014" name="Curr. Opin. Struct. Biol.">
        <title>A new system for naming ribosomal proteins.</title>
        <authorList>
            <person name="Ban N."/>
            <person name="Beckmann R."/>
            <person name="Cate J.H.D."/>
            <person name="Dinman J.D."/>
            <person name="Dragon F."/>
            <person name="Ellis S.R."/>
            <person name="Lafontaine D.L.J."/>
            <person name="Lindahl L."/>
            <person name="Liljas A."/>
            <person name="Lipton J.M."/>
            <person name="McAlear M.A."/>
            <person name="Moore P.B."/>
            <person name="Noller H.F."/>
            <person name="Ortega J."/>
            <person name="Panse V.G."/>
            <person name="Ramakrishnan V."/>
            <person name="Spahn C.M.T."/>
            <person name="Steitz T.A."/>
            <person name="Tchorzewski M."/>
            <person name="Tollervey D."/>
            <person name="Warren A.J."/>
            <person name="Williamson J.R."/>
            <person name="Wilson D."/>
            <person name="Yonath A."/>
            <person name="Yusupov M."/>
        </authorList>
    </citation>
    <scope>NOMENCLATURE</scope>
</reference>
<reference key="15">
    <citation type="journal article" date="2003" name="Cell">
        <title>Study of the structural dynamics of the E. coli 70S ribosome using real-space refinement.</title>
        <authorList>
            <person name="Gao H."/>
            <person name="Sengupta J."/>
            <person name="Valle M."/>
            <person name="Korostelev A."/>
            <person name="Eswar N."/>
            <person name="Stagg S.M."/>
            <person name="Van Roey P."/>
            <person name="Agrawal R.K."/>
            <person name="Harvey S.C."/>
            <person name="Sali A."/>
            <person name="Chapman M.S."/>
            <person name="Frank J."/>
        </authorList>
    </citation>
    <scope>STRUCTURE BY ELECTRON MICROSCOPY (11.50 ANGSTROMS)</scope>
    <scope>SUBUNIT</scope>
    <source>
        <strain>MRE-600</strain>
    </source>
</reference>
<reference key="16">
    <citation type="journal article" date="2005" name="Science">
        <title>Structures of the bacterial ribosome at 3.5 A resolution.</title>
        <authorList>
            <person name="Schuwirth B.S."/>
            <person name="Borovinskaya M.A."/>
            <person name="Hau C.W."/>
            <person name="Zhang W."/>
            <person name="Vila-Sanjurjo A."/>
            <person name="Holton J.M."/>
            <person name="Cate J.H.D."/>
        </authorList>
    </citation>
    <scope>X-RAY CRYSTALLOGRAPHY (3.46 ANGSTROMS) OF 2 DIFFERENT RIBOSOME STRUCTURES</scope>
    <scope>SUBUNIT</scope>
    <source>
        <strain>MRE-600</strain>
    </source>
</reference>
<reference key="17">
    <citation type="journal article" date="2011" name="Nat. Struct. Mol. Biol.">
        <title>Cryo-EM structure of the ribosome-SecYE complex in the membrane environment.</title>
        <authorList>
            <person name="Frauenfeld J."/>
            <person name="Gumbart J."/>
            <person name="Sluis E.O."/>
            <person name="Funes S."/>
            <person name="Gartmann M."/>
            <person name="Beatrix B."/>
            <person name="Mielke T."/>
            <person name="Berninghausen O."/>
            <person name="Becker T."/>
            <person name="Schulten K."/>
            <person name="Beckmann R."/>
        </authorList>
    </citation>
    <scope>STRUCTURE BY CRYOELECTRON MICROSCOPY IN COMPLEX WITH SECYE AND A NASCENT POLYPEPTIDE CHAIN</scope>
    <scope>SUBUNIT</scope>
</reference>
<reference key="18">
    <citation type="journal article" date="2014" name="Cell Rep.">
        <title>Molecular basis for the ribosome functioning as an L-tryptophan sensor.</title>
        <authorList>
            <person name="Bischoff L."/>
            <person name="Berninghausen O."/>
            <person name="Beckmann R."/>
        </authorList>
    </citation>
    <scope>STRUCTURE BY ELECTRON MICROSCOPY (3.80 ANGSTROMS) OF 1-93 IN TNAC-STALLED 50S RIBOSOMAL SUBUNIT</scope>
    <scope>SUBUNIT</scope>
    <source>
        <strain>K12 / A19 / KC6</strain>
    </source>
</reference>
<reference key="19">
    <citation type="journal article" date="2014" name="PLoS Biol.">
        <title>Structural and functional insights into the mode of action of a universally conserved Obg GTPase.</title>
        <authorList>
            <person name="Feng B."/>
            <person name="Mandava C.S."/>
            <person name="Guo Q."/>
            <person name="Wang J."/>
            <person name="Cao W."/>
            <person name="Li N."/>
            <person name="Zhang Y."/>
            <person name="Zhang Y."/>
            <person name="Wang Z."/>
            <person name="Wu J."/>
            <person name="Sanyal S."/>
            <person name="Lei J."/>
            <person name="Gao N."/>
        </authorList>
    </citation>
    <scope>STRUCTURE BY ELECTRON MICROSCOPY (5.5 ANGSTROMS) OF 50S RIBOSOMAL SUBUNIT IN COMPLEX WITH OBGE AND GMP-PNP</scope>
    <scope>SUBUNIT</scope>
</reference>
<reference key="20">
    <citation type="journal article" date="2017" name="Nature">
        <title>Mechanistic insights into the alternative translation termination by ArfA and RF2.</title>
        <authorList>
            <person name="Ma C."/>
            <person name="Kurita D."/>
            <person name="Li N."/>
            <person name="Chen Y."/>
            <person name="Himeno H."/>
            <person name="Gao N."/>
        </authorList>
    </citation>
    <scope>STRUCTURE BY ELECTRON MICROSCOPY (3.0 ANGSTROMS) OF 70S RIBOSOME IN COMPLEX WITH ARFA AND RF2</scope>
    <scope>SUBUNIT</scope>
</reference>
<reference key="21">
    <citation type="journal article" date="2017" name="Nature">
        <title>Structural basis for ArfA-RF2-mediated translation termination on mRNAs lacking stop codons.</title>
        <authorList>
            <person name="Huter P."/>
            <person name="Mueller C."/>
            <person name="Beckert B."/>
            <person name="Arenz S."/>
            <person name="Berninghausen O."/>
            <person name="Beckmann R."/>
            <person name="Wilson D.N."/>
        </authorList>
    </citation>
    <scope>STRUCTURE BY ELECTRON MICROSCOPY (3.1 ANGSTROMS) OF 70S RIBOSOME IN COMPLEX WITH ARFA AND RF2</scope>
    <scope>SUBUNIT</scope>
</reference>
<reference key="22">
    <citation type="journal article" date="2016" name="Science">
        <title>Translational termination without a stop codon.</title>
        <authorList>
            <person name="James N.R."/>
            <person name="Brown A."/>
            <person name="Gordiyenko Y."/>
            <person name="Ramakrishnan V."/>
        </authorList>
    </citation>
    <scope>STRUCTURE BY ELECTRON MICROSCOPY (2.97 ANGSTROMS) OF 70S RIBOSOME IN COMPLEX WITH ARFA AND RF2</scope>
    <scope>SUBUNIT</scope>
</reference>
<reference key="23">
    <citation type="journal article" date="2017" name="Nature">
        <title>Structural basis of co-translational quality control by ArfA and RF2 bound to ribosome.</title>
        <authorList>
            <person name="Zeng F."/>
            <person name="Chen Y."/>
            <person name="Remis J."/>
            <person name="Shekhar M."/>
            <person name="Phillips J.C."/>
            <person name="Tajkhorshid E."/>
            <person name="Jin H."/>
        </authorList>
    </citation>
    <scope>STRUCTURE BY ELECTRON MICROSCOPY (3.52 ANGSTROMS) OF 70S RIBOSOME IN COMPLEX WITH ARFA AND RF2</scope>
    <scope>SUBUNIT</scope>
</reference>